<name>S22A2_HUMAN</name>
<dbReference type="EMBL" id="X98333">
    <property type="protein sequence ID" value="CAA66978.1"/>
    <property type="molecule type" value="mRNA"/>
</dbReference>
<dbReference type="EMBL" id="AB075951">
    <property type="protein sequence ID" value="BAC02720.1"/>
    <property type="molecule type" value="mRNA"/>
</dbReference>
<dbReference type="EMBL" id="AK290787">
    <property type="protein sequence ID" value="BAF83476.1"/>
    <property type="molecule type" value="mRNA"/>
</dbReference>
<dbReference type="EMBL" id="AL162582">
    <property type="status" value="NOT_ANNOTATED_CDS"/>
    <property type="molecule type" value="Genomic_DNA"/>
</dbReference>
<dbReference type="EMBL" id="CH471051">
    <property type="protein sequence ID" value="EAW47602.1"/>
    <property type="molecule type" value="Genomic_DNA"/>
</dbReference>
<dbReference type="EMBL" id="BC030978">
    <property type="protein sequence ID" value="AAH30978.1"/>
    <property type="molecule type" value="mRNA"/>
</dbReference>
<dbReference type="EMBL" id="BC039899">
    <property type="protein sequence ID" value="AAH39899.1"/>
    <property type="molecule type" value="mRNA"/>
</dbReference>
<dbReference type="EMBL" id="AJ251885">
    <property type="protein sequence ID" value="CAB96133.1"/>
    <property type="molecule type" value="Genomic_DNA"/>
</dbReference>
<dbReference type="CCDS" id="CCDS5276.1">
    <molecule id="O15244-1"/>
</dbReference>
<dbReference type="RefSeq" id="NP_003049.2">
    <molecule id="O15244-1"/>
    <property type="nucleotide sequence ID" value="NM_003058.4"/>
</dbReference>
<dbReference type="PDB" id="8ET9">
    <property type="method" value="EM"/>
    <property type="resolution" value="3.61 A"/>
    <property type="chains" value="A=1-555"/>
</dbReference>
<dbReference type="PDBsum" id="8ET9"/>
<dbReference type="EMDB" id="EMD-28589"/>
<dbReference type="SMR" id="O15244"/>
<dbReference type="BioGRID" id="112469">
    <property type="interactions" value="101"/>
</dbReference>
<dbReference type="FunCoup" id="O15244">
    <property type="interactions" value="138"/>
</dbReference>
<dbReference type="IntAct" id="O15244">
    <property type="interactions" value="42"/>
</dbReference>
<dbReference type="STRING" id="9606.ENSP00000355920"/>
<dbReference type="BindingDB" id="O15244"/>
<dbReference type="ChEMBL" id="CHEMBL1743122"/>
<dbReference type="DrugBank" id="DB12001">
    <property type="generic name" value="Abemaciclib"/>
</dbReference>
<dbReference type="DrugBank" id="DB08838">
    <property type="generic name" value="Agmatine"/>
</dbReference>
<dbReference type="DrugBank" id="DB00437">
    <property type="generic name" value="Allopurinol"/>
</dbReference>
<dbReference type="DrugBank" id="DB00915">
    <property type="generic name" value="Amantadine"/>
</dbReference>
<dbReference type="DrugBank" id="DB11640">
    <property type="generic name" value="Amifampridine"/>
</dbReference>
<dbReference type="DrugBank" id="DB00594">
    <property type="generic name" value="Amiloride"/>
</dbReference>
<dbReference type="DrugBank" id="DB00345">
    <property type="generic name" value="Aminohippuric acid"/>
</dbReference>
<dbReference type="DrugBank" id="DB01118">
    <property type="generic name" value="Amiodarone"/>
</dbReference>
<dbReference type="DrugBank" id="DB11901">
    <property type="generic name" value="Apalutamide"/>
</dbReference>
<dbReference type="DrugBank" id="DB05025">
    <property type="generic name" value="Arimoclomol"/>
</dbReference>
<dbReference type="DrugBank" id="DB11817">
    <property type="generic name" value="Baricitinib"/>
</dbReference>
<dbReference type="DrugBank" id="DB01156">
    <property type="generic name" value="Bupropion"/>
</dbReference>
<dbReference type="DrugBank" id="DB12218">
    <property type="generic name" value="Capivasertib"/>
</dbReference>
<dbReference type="DrugBank" id="DB01114">
    <property type="generic name" value="Chlorpheniramine"/>
</dbReference>
<dbReference type="DrugBank" id="DB00122">
    <property type="generic name" value="Choline"/>
</dbReference>
<dbReference type="DrugBank" id="DB14006">
    <property type="generic name" value="Choline salicylate"/>
</dbReference>
<dbReference type="DrugBank" id="DB00501">
    <property type="generic name" value="Cimetidine"/>
</dbReference>
<dbReference type="DrugBank" id="DB00515">
    <property type="generic name" value="Cisplatin"/>
</dbReference>
<dbReference type="DrugBank" id="DB00758">
    <property type="generic name" value="Clopidogrel"/>
</dbReference>
<dbReference type="DrugBank" id="DB00363">
    <property type="generic name" value="Clozapine"/>
</dbReference>
<dbReference type="DrugBank" id="DB00907">
    <property type="generic name" value="Cocaine"/>
</dbReference>
<dbReference type="DrugBank" id="DB08912">
    <property type="generic name" value="Dabrafenib"/>
</dbReference>
<dbReference type="DrugBank" id="DB06637">
    <property type="generic name" value="Dalfampridine"/>
</dbReference>
<dbReference type="DrugBank" id="DB16133">
    <property type="generic name" value="Delgocitinib"/>
</dbReference>
<dbReference type="DrugBank" id="DB01151">
    <property type="generic name" value="Desipramine"/>
</dbReference>
<dbReference type="DrugBank" id="DB09555">
    <property type="generic name" value="Dexchlorpheniramine maleate"/>
</dbReference>
<dbReference type="DrugBank" id="DB01160">
    <property type="generic name" value="Dinoprost tromethamine"/>
</dbReference>
<dbReference type="DrugBank" id="DB00917">
    <property type="generic name" value="Dinoprostone"/>
</dbReference>
<dbReference type="DrugBank" id="DB01075">
    <property type="generic name" value="Diphenhydramine"/>
</dbReference>
<dbReference type="DrugBank" id="DB00280">
    <property type="generic name" value="Disopyramide"/>
</dbReference>
<dbReference type="DrugBank" id="DB00204">
    <property type="generic name" value="Dofetilide"/>
</dbReference>
<dbReference type="DrugBank" id="DB08930">
    <property type="generic name" value="Dolutegravir"/>
</dbReference>
<dbReference type="DrugBank" id="DB00988">
    <property type="generic name" value="Dopamine"/>
</dbReference>
<dbReference type="DrugBank" id="DB04855">
    <property type="generic name" value="Dronedarone"/>
</dbReference>
<dbReference type="DrugBank" id="DB13874">
    <property type="generic name" value="Enasidenib"/>
</dbReference>
<dbReference type="DrugBank" id="DB11718">
    <property type="generic name" value="Encorafenib"/>
</dbReference>
<dbReference type="DrugBank" id="DB00668">
    <property type="generic name" value="Epinephrine"/>
</dbReference>
<dbReference type="DrugBank" id="DB12147">
    <property type="generic name" value="Erdafitinib"/>
</dbReference>
<dbReference type="DrugBank" id="DB00783">
    <property type="generic name" value="Estradiol"/>
</dbReference>
<dbReference type="DrugBank" id="DB13952">
    <property type="generic name" value="Estradiol acetate"/>
</dbReference>
<dbReference type="DrugBank" id="DB13953">
    <property type="generic name" value="Estradiol benzoate"/>
</dbReference>
<dbReference type="DrugBank" id="DB13954">
    <property type="generic name" value="Estradiol cypionate"/>
</dbReference>
<dbReference type="DrugBank" id="DB13955">
    <property type="generic name" value="Estradiol dienanthate"/>
</dbReference>
<dbReference type="DrugBank" id="DB13956">
    <property type="generic name" value="Estradiol valerate"/>
</dbReference>
<dbReference type="DrugBank" id="DB00927">
    <property type="generic name" value="Famotidine"/>
</dbReference>
<dbReference type="DrugBank" id="DB12265">
    <property type="generic name" value="Fexinidazole"/>
</dbReference>
<dbReference type="DrugBank" id="DB00690">
    <property type="generic name" value="Flurazepam"/>
</dbReference>
<dbReference type="DrugBank" id="DB00798">
    <property type="generic name" value="Gentamicin"/>
</dbReference>
<dbReference type="DrugBank" id="DB12645">
    <property type="generic name" value="Givinostat"/>
</dbReference>
<dbReference type="DrugBank" id="DB00986">
    <property type="generic name" value="Glycopyrronium"/>
</dbReference>
<dbReference type="DrugBank" id="DB00365">
    <property type="generic name" value="Grepafloxacin"/>
</dbReference>
<dbReference type="DrugBank" id="DB01018">
    <property type="generic name" value="Guanfacine"/>
</dbReference>
<dbReference type="DrugBank" id="DB00536">
    <property type="generic name" value="Guanidine"/>
</dbReference>
<dbReference type="DrugBank" id="DB05381">
    <property type="generic name" value="Histamine"/>
</dbReference>
<dbReference type="DrugBank" id="DB00619">
    <property type="generic name" value="Imatinib"/>
</dbReference>
<dbReference type="DrugBank" id="DB00458">
    <property type="generic name" value="Imipramine"/>
</dbReference>
<dbReference type="DrugBank" id="DB11886">
    <property type="generic name" value="Infigratinib"/>
</dbReference>
<dbReference type="DrugBank" id="DB11633">
    <property type="generic name" value="Isavuconazole"/>
</dbReference>
<dbReference type="DrugBank" id="DB06636">
    <property type="generic name" value="Isavuconazonium"/>
</dbReference>
<dbReference type="DrugBank" id="DB00709">
    <property type="generic name" value="Lamivudine"/>
</dbReference>
<dbReference type="DrugBank" id="DB00555">
    <property type="generic name" value="Lamotrigine"/>
</dbReference>
<dbReference type="DrugBank" id="DB00448">
    <property type="generic name" value="Lansoprazole"/>
</dbReference>
<dbReference type="DrugBank" id="DB09078">
    <property type="generic name" value="Lenvatinib"/>
</dbReference>
<dbReference type="DrugBank" id="DB01137">
    <property type="generic name" value="Levofloxacin"/>
</dbReference>
<dbReference type="DrugBank" id="DB05667">
    <property type="generic name" value="Levoketoconazole"/>
</dbReference>
<dbReference type="DrugBank" id="DB08882">
    <property type="generic name" value="Linagliptin"/>
</dbReference>
<dbReference type="DrugBank" id="DB05501">
    <property type="generic name" value="Mavorixafor"/>
</dbReference>
<dbReference type="DrugBank" id="DB01043">
    <property type="generic name" value="Memantine"/>
</dbReference>
<dbReference type="DrugBank" id="DB00331">
    <property type="generic name" value="Metformin"/>
</dbReference>
<dbReference type="DrugBank" id="DB09241">
    <property type="generic name" value="Methylene blue"/>
</dbReference>
<dbReference type="DrugBank" id="DB00264">
    <property type="generic name" value="Metoprolol"/>
</dbReference>
<dbReference type="DrugBank" id="DB08893">
    <property type="generic name" value="Mirabegron"/>
</dbReference>
<dbReference type="DrugBank" id="DB08840">
    <property type="generic name" value="N-methylnicotinamide"/>
</dbReference>
<dbReference type="DrugBank" id="DB12598">
    <property type="generic name" value="Nafamostat"/>
</dbReference>
<dbReference type="DrugBank" id="DB00184">
    <property type="generic name" value="Nicotine"/>
</dbReference>
<dbReference type="DrugBank" id="DB00368">
    <property type="generic name" value="Norepinephrine"/>
</dbReference>
<dbReference type="DrugBank" id="DB16267">
    <property type="generic name" value="Olutasidenib"/>
</dbReference>
<dbReference type="DrugBank" id="DB11837">
    <property type="generic name" value="Osilodrostat"/>
</dbReference>
<dbReference type="DrugBank" id="DB00526">
    <property type="generic name" value="Oxaliplatin"/>
</dbReference>
<dbReference type="DrugBank" id="DB01580">
    <property type="generic name" value="Oxprenolol"/>
</dbReference>
<dbReference type="DrugBank" id="DB11697">
    <property type="generic name" value="Pacritinib"/>
</dbReference>
<dbReference type="DrugBank" id="DB01337">
    <property type="generic name" value="Pancuronium"/>
</dbReference>
<dbReference type="DrugBank" id="DB15102">
    <property type="generic name" value="Pemigatinib"/>
</dbReference>
<dbReference type="DrugBank" id="DB00914">
    <property type="generic name" value="Phenformin"/>
</dbReference>
<dbReference type="DrugBank" id="DB00925">
    <property type="generic name" value="Phenoxybenzamine"/>
</dbReference>
<dbReference type="DrugBank" id="DB05383">
    <property type="generic name" value="Pimagedine"/>
</dbReference>
<dbReference type="DrugBank" id="DB00960">
    <property type="generic name" value="Pindolol"/>
</dbReference>
<dbReference type="DrugBank" id="DB00413">
    <property type="generic name" value="Pramipexole"/>
</dbReference>
<dbReference type="DrugBank" id="DB01032">
    <property type="generic name" value="Probenecid"/>
</dbReference>
<dbReference type="DrugBank" id="DB01035">
    <property type="generic name" value="Procainamide"/>
</dbReference>
<dbReference type="DrugBank" id="DB00396">
    <property type="generic name" value="Progesterone"/>
</dbReference>
<dbReference type="DrugBank" id="DB00571">
    <property type="generic name" value="Propranolol"/>
</dbReference>
<dbReference type="DrugBank" id="DB01103">
    <property type="generic name" value="Quinacrine"/>
</dbReference>
<dbReference type="DrugBank" id="DB00908">
    <property type="generic name" value="Quinidine"/>
</dbReference>
<dbReference type="DrugBank" id="DB00468">
    <property type="generic name" value="Quinine"/>
</dbReference>
<dbReference type="DrugBank" id="DB00863">
    <property type="generic name" value="Ranitidine"/>
</dbReference>
<dbReference type="DrugBank" id="DB00206">
    <property type="generic name" value="Reserpine"/>
</dbReference>
<dbReference type="DrugBank" id="DB18515">
    <property type="generic name" value="Revumenib"/>
</dbReference>
<dbReference type="DrugBank" id="DB12457">
    <property type="generic name" value="Rimegepant"/>
</dbReference>
<dbReference type="DrugBank" id="DB06176">
    <property type="generic name" value="Romidepsin"/>
</dbReference>
<dbReference type="DrugBank" id="DB00938">
    <property type="generic name" value="Salmeterol"/>
</dbReference>
<dbReference type="DrugBank" id="DB08839">
    <property type="generic name" value="Serotonin"/>
</dbReference>
<dbReference type="DrugBank" id="DB19325">
    <property type="generic name" value="Sofpironium"/>
</dbReference>
<dbReference type="DrugBank" id="DB14754">
    <property type="generic name" value="Solriamfetol"/>
</dbReference>
<dbReference type="DrugBank" id="DB00391">
    <property type="generic name" value="Sulpiride"/>
</dbReference>
<dbReference type="DrugBank" id="DB06608">
    <property type="generic name" value="Tafenoquine"/>
</dbReference>
<dbReference type="DrugBank" id="DB15133">
    <property type="generic name" value="Tepotinib"/>
</dbReference>
<dbReference type="DrugBank" id="DB00871">
    <property type="generic name" value="Terbutaline"/>
</dbReference>
<dbReference type="DrugBank" id="DB13946">
    <property type="generic name" value="Testosterone undecanoate"/>
</dbReference>
<dbReference type="DrugBank" id="DB08837">
    <property type="generic name" value="Tetraethylammonium"/>
</dbReference>
<dbReference type="DrugBank" id="DB11712">
    <property type="generic name" value="Tezacaftor"/>
</dbReference>
<dbReference type="DrugBank" id="DB00152">
    <property type="generic name" value="Thiamine"/>
</dbReference>
<dbReference type="DrugBank" id="DB09343">
    <property type="generic name" value="Tipiracil"/>
</dbReference>
<dbReference type="DrugBank" id="DB06137">
    <property type="generic name" value="Tirbanibulin"/>
</dbReference>
<dbReference type="DrugBank" id="DB15442">
    <property type="generic name" value="Trilaciclib"/>
</dbReference>
<dbReference type="DrugBank" id="DB01199">
    <property type="generic name" value="Tubocurarine"/>
</dbReference>
<dbReference type="DrugBank" id="DB11652">
    <property type="generic name" value="Tucatinib"/>
</dbReference>
<dbReference type="DrugBank" id="DB15328">
    <property type="generic name" value="Ubrogepant"/>
</dbReference>
<dbReference type="DrugBank" id="DB09076">
    <property type="generic name" value="Umeclidinium"/>
</dbReference>
<dbReference type="DrugBank" id="DB05294">
    <property type="generic name" value="Vandetanib"/>
</dbReference>
<dbReference type="DrugBank" id="DB01273">
    <property type="generic name" value="Varenicline"/>
</dbReference>
<dbReference type="DrugBank" id="DB00495">
    <property type="generic name" value="Zidovudine"/>
</dbReference>
<dbReference type="DrugCentral" id="O15244"/>
<dbReference type="GuidetoPHARMACOLOGY" id="1020"/>
<dbReference type="TCDB" id="2.A.1.19.30">
    <property type="family name" value="the major facilitator superfamily (mfs)"/>
</dbReference>
<dbReference type="GlyCosmos" id="O15244">
    <property type="glycosylation" value="1 site, No reported glycans"/>
</dbReference>
<dbReference type="GlyGen" id="O15244">
    <property type="glycosylation" value="1 site"/>
</dbReference>
<dbReference type="iPTMnet" id="O15244"/>
<dbReference type="PhosphoSitePlus" id="O15244"/>
<dbReference type="BioMuta" id="SLC22A2"/>
<dbReference type="MassIVE" id="O15244"/>
<dbReference type="PaxDb" id="9606-ENSP00000355920"/>
<dbReference type="PeptideAtlas" id="O15244"/>
<dbReference type="ProteomicsDB" id="48533">
    <molecule id="O15244-1"/>
</dbReference>
<dbReference type="ProteomicsDB" id="48534">
    <molecule id="O15244-2"/>
</dbReference>
<dbReference type="ProteomicsDB" id="48535">
    <molecule id="O15244-3"/>
</dbReference>
<dbReference type="Antibodypedia" id="20032">
    <property type="antibodies" value="268 antibodies from 29 providers"/>
</dbReference>
<dbReference type="DNASU" id="6582"/>
<dbReference type="Ensembl" id="ENST00000366953.8">
    <molecule id="O15244-1"/>
    <property type="protein sequence ID" value="ENSP00000355920.3"/>
    <property type="gene ID" value="ENSG00000112499.13"/>
</dbReference>
<dbReference type="GeneID" id="6582"/>
<dbReference type="KEGG" id="hsa:6582"/>
<dbReference type="MANE-Select" id="ENST00000366953.8">
    <property type="protein sequence ID" value="ENSP00000355920.3"/>
    <property type="RefSeq nucleotide sequence ID" value="NM_003058.4"/>
    <property type="RefSeq protein sequence ID" value="NP_003049.2"/>
</dbReference>
<dbReference type="UCSC" id="uc003qtf.4">
    <molecule id="O15244-1"/>
    <property type="organism name" value="human"/>
</dbReference>
<dbReference type="AGR" id="HGNC:10966"/>
<dbReference type="CTD" id="6582"/>
<dbReference type="DisGeNET" id="6582"/>
<dbReference type="GeneCards" id="SLC22A2"/>
<dbReference type="HGNC" id="HGNC:10966">
    <property type="gene designation" value="SLC22A2"/>
</dbReference>
<dbReference type="HPA" id="ENSG00000112499">
    <property type="expression patterns" value="Tissue enriched (kidney)"/>
</dbReference>
<dbReference type="MIM" id="602608">
    <property type="type" value="gene"/>
</dbReference>
<dbReference type="neXtProt" id="NX_O15244"/>
<dbReference type="OpenTargets" id="ENSG00000112499"/>
<dbReference type="PharmGKB" id="PA331"/>
<dbReference type="VEuPathDB" id="HostDB:ENSG00000112499"/>
<dbReference type="eggNOG" id="KOG0255">
    <property type="taxonomic scope" value="Eukaryota"/>
</dbReference>
<dbReference type="GeneTree" id="ENSGT00940000155089"/>
<dbReference type="HOGENOM" id="CLU_001265_33_5_1"/>
<dbReference type="InParanoid" id="O15244"/>
<dbReference type="OMA" id="DLQWLKV"/>
<dbReference type="OrthoDB" id="5141738at2759"/>
<dbReference type="PAN-GO" id="O15244">
    <property type="GO annotations" value="2 GO annotations based on evolutionary models"/>
</dbReference>
<dbReference type="PhylomeDB" id="O15244"/>
<dbReference type="TreeFam" id="TF315847"/>
<dbReference type="PathwayCommons" id="O15244"/>
<dbReference type="Reactome" id="R-HSA-112311">
    <property type="pathway name" value="Neurotransmitter clearance"/>
</dbReference>
<dbReference type="Reactome" id="R-HSA-181430">
    <property type="pathway name" value="Norepinephrine Neurotransmitter Release Cycle"/>
</dbReference>
<dbReference type="Reactome" id="R-HSA-2161517">
    <property type="pathway name" value="Abacavir transmembrane transport"/>
</dbReference>
<dbReference type="Reactome" id="R-HSA-442660">
    <property type="pathway name" value="Na+/Cl- dependent neurotransmitter transporters"/>
</dbReference>
<dbReference type="Reactome" id="R-HSA-549127">
    <property type="pathway name" value="Organic cation transport"/>
</dbReference>
<dbReference type="SABIO-RK" id="O15244"/>
<dbReference type="SignaLink" id="O15244"/>
<dbReference type="BioGRID-ORCS" id="6582">
    <property type="hits" value="14 hits in 1146 CRISPR screens"/>
</dbReference>
<dbReference type="GeneWiki" id="SLC22A2"/>
<dbReference type="GenomeRNAi" id="6582"/>
<dbReference type="Pharos" id="O15244">
    <property type="development level" value="Tchem"/>
</dbReference>
<dbReference type="PRO" id="PR:O15244"/>
<dbReference type="Proteomes" id="UP000005640">
    <property type="component" value="Chromosome 6"/>
</dbReference>
<dbReference type="RNAct" id="O15244">
    <property type="molecule type" value="protein"/>
</dbReference>
<dbReference type="Bgee" id="ENSG00000112499">
    <property type="expression patterns" value="Expressed in adult mammalian kidney and 76 other cell types or tissues"/>
</dbReference>
<dbReference type="ExpressionAtlas" id="O15244">
    <property type="expression patterns" value="baseline and differential"/>
</dbReference>
<dbReference type="GO" id="GO:0016324">
    <property type="term" value="C:apical plasma membrane"/>
    <property type="evidence" value="ECO:0000314"/>
    <property type="project" value="UniProtKB"/>
</dbReference>
<dbReference type="GO" id="GO:0009925">
    <property type="term" value="C:basal plasma membrane"/>
    <property type="evidence" value="ECO:0000314"/>
    <property type="project" value="UniProtKB"/>
</dbReference>
<dbReference type="GO" id="GO:0016323">
    <property type="term" value="C:basolateral plasma membrane"/>
    <property type="evidence" value="ECO:0000250"/>
    <property type="project" value="UniProtKB"/>
</dbReference>
<dbReference type="GO" id="GO:0070062">
    <property type="term" value="C:extracellular exosome"/>
    <property type="evidence" value="ECO:0007005"/>
    <property type="project" value="UniProtKB"/>
</dbReference>
<dbReference type="GO" id="GO:0016020">
    <property type="term" value="C:membrane"/>
    <property type="evidence" value="ECO:0000304"/>
    <property type="project" value="ProtInc"/>
</dbReference>
<dbReference type="GO" id="GO:0005886">
    <property type="term" value="C:plasma membrane"/>
    <property type="evidence" value="ECO:0000314"/>
    <property type="project" value="ARUK-UCL"/>
</dbReference>
<dbReference type="GO" id="GO:0098793">
    <property type="term" value="C:presynapse"/>
    <property type="evidence" value="ECO:0007669"/>
    <property type="project" value="GOC"/>
</dbReference>
<dbReference type="GO" id="GO:0005277">
    <property type="term" value="F:acetylcholine transmembrane transporter activity"/>
    <property type="evidence" value="ECO:0000314"/>
    <property type="project" value="UniProtKB"/>
</dbReference>
<dbReference type="GO" id="GO:0005275">
    <property type="term" value="F:amine transmembrane transporter activity"/>
    <property type="evidence" value="ECO:0000314"/>
    <property type="project" value="ARUK-UCL"/>
</dbReference>
<dbReference type="GO" id="GO:0015220">
    <property type="term" value="F:choline transmembrane transporter activity"/>
    <property type="evidence" value="ECO:0000314"/>
    <property type="project" value="ARUK-UCL"/>
</dbReference>
<dbReference type="GO" id="GO:0015562">
    <property type="term" value="F:efflux transmembrane transporter activity"/>
    <property type="evidence" value="ECO:0000314"/>
    <property type="project" value="ARUK-UCL"/>
</dbReference>
<dbReference type="GO" id="GO:0015179">
    <property type="term" value="F:L-amino acid transmembrane transporter activity"/>
    <property type="evidence" value="ECO:0000315"/>
    <property type="project" value="ARUK-UCL"/>
</dbReference>
<dbReference type="GO" id="GO:0061459">
    <property type="term" value="F:L-arginine transmembrane transporter activity"/>
    <property type="evidence" value="ECO:0000315"/>
    <property type="project" value="ARUK-UCL"/>
</dbReference>
<dbReference type="GO" id="GO:0008504">
    <property type="term" value="F:monoamine transmembrane transporter activity"/>
    <property type="evidence" value="ECO:0000314"/>
    <property type="project" value="UniProtKB"/>
</dbReference>
<dbReference type="GO" id="GO:0005326">
    <property type="term" value="F:neurotransmitter transmembrane transporter activity"/>
    <property type="evidence" value="ECO:0000314"/>
    <property type="project" value="UniProtKB"/>
</dbReference>
<dbReference type="GO" id="GO:0008514">
    <property type="term" value="F:organic anion transmembrane transporter activity"/>
    <property type="evidence" value="ECO:0000314"/>
    <property type="project" value="UniProtKB"/>
</dbReference>
<dbReference type="GO" id="GO:0015101">
    <property type="term" value="F:organic cation transmembrane transporter activity"/>
    <property type="evidence" value="ECO:0000314"/>
    <property type="project" value="UniProtKB"/>
</dbReference>
<dbReference type="GO" id="GO:0015132">
    <property type="term" value="F:prostaglandin transmembrane transporter activity"/>
    <property type="evidence" value="ECO:0000314"/>
    <property type="project" value="UniProtKB"/>
</dbReference>
<dbReference type="GO" id="GO:0015489">
    <property type="term" value="F:putrescine transmembrane transporter activity"/>
    <property type="evidence" value="ECO:0000314"/>
    <property type="project" value="UniProtKB"/>
</dbReference>
<dbReference type="GO" id="GO:0015214">
    <property type="term" value="F:pyrimidine nucleoside transmembrane transporter activity"/>
    <property type="evidence" value="ECO:0000315"/>
    <property type="project" value="ARUK-UCL"/>
</dbReference>
<dbReference type="GO" id="GO:0015651">
    <property type="term" value="F:quaternary ammonium group transmembrane transporter activity"/>
    <property type="evidence" value="ECO:0000314"/>
    <property type="project" value="UniProtKB"/>
</dbReference>
<dbReference type="GO" id="GO:0015606">
    <property type="term" value="F:spermidine transmembrane transporter activity"/>
    <property type="evidence" value="ECO:0000250"/>
    <property type="project" value="UniProtKB"/>
</dbReference>
<dbReference type="GO" id="GO:0015234">
    <property type="term" value="F:thiamine transmembrane transporter activity"/>
    <property type="evidence" value="ECO:0000314"/>
    <property type="project" value="UniProtKB"/>
</dbReference>
<dbReference type="GO" id="GO:0019534">
    <property type="term" value="F:toxin transmembrane transporter activity"/>
    <property type="evidence" value="ECO:0000314"/>
    <property type="project" value="ARUK-UCL"/>
</dbReference>
<dbReference type="GO" id="GO:0042910">
    <property type="term" value="F:xenobiotic transmembrane transporter activity"/>
    <property type="evidence" value="ECO:0000314"/>
    <property type="project" value="UniProtKB"/>
</dbReference>
<dbReference type="GO" id="GO:0015870">
    <property type="term" value="P:acetylcholine transport"/>
    <property type="evidence" value="ECO:0000314"/>
    <property type="project" value="UniProtKB"/>
</dbReference>
<dbReference type="GO" id="GO:0015837">
    <property type="term" value="P:amine transport"/>
    <property type="evidence" value="ECO:0000314"/>
    <property type="project" value="ARUK-UCL"/>
</dbReference>
<dbReference type="GO" id="GO:0089718">
    <property type="term" value="P:amino acid import across plasma membrane"/>
    <property type="evidence" value="ECO:0000315"/>
    <property type="project" value="ARUK-UCL"/>
</dbReference>
<dbReference type="GO" id="GO:0007589">
    <property type="term" value="P:body fluid secretion"/>
    <property type="evidence" value="ECO:0000304"/>
    <property type="project" value="ProtInc"/>
</dbReference>
<dbReference type="GO" id="GO:1990748">
    <property type="term" value="P:cellular detoxification"/>
    <property type="evidence" value="ECO:0000314"/>
    <property type="project" value="ARUK-UCL"/>
</dbReference>
<dbReference type="GO" id="GO:0015871">
    <property type="term" value="P:choline transport"/>
    <property type="evidence" value="ECO:0000314"/>
    <property type="project" value="ARUK-UCL"/>
</dbReference>
<dbReference type="GO" id="GO:0015872">
    <property type="term" value="P:dopamine transport"/>
    <property type="evidence" value="ECO:0000314"/>
    <property type="project" value="UniProtKB"/>
</dbReference>
<dbReference type="GO" id="GO:0090494">
    <property type="term" value="P:dopamine uptake"/>
    <property type="evidence" value="ECO:0000314"/>
    <property type="project" value="ARUK-UCL"/>
</dbReference>
<dbReference type="GO" id="GO:0048241">
    <property type="term" value="P:epinephrine transport"/>
    <property type="evidence" value="ECO:0000314"/>
    <property type="project" value="UniProtKB"/>
</dbReference>
<dbReference type="GO" id="GO:0140115">
    <property type="term" value="P:export across plasma membrane"/>
    <property type="evidence" value="ECO:0000314"/>
    <property type="project" value="ARUK-UCL"/>
</dbReference>
<dbReference type="GO" id="GO:0051608">
    <property type="term" value="P:histamine transport"/>
    <property type="evidence" value="ECO:0000314"/>
    <property type="project" value="UniProtKB"/>
</dbReference>
<dbReference type="GO" id="GO:0051615">
    <property type="term" value="P:histamine uptake"/>
    <property type="evidence" value="ECO:0000314"/>
    <property type="project" value="ARUK-UCL"/>
</dbReference>
<dbReference type="GO" id="GO:1902475">
    <property type="term" value="P:L-alpha-amino acid transmembrane transport"/>
    <property type="evidence" value="ECO:0000315"/>
    <property type="project" value="ARUK-UCL"/>
</dbReference>
<dbReference type="GO" id="GO:0097638">
    <property type="term" value="P:L-arginine import across plasma membrane"/>
    <property type="evidence" value="ECO:0000315"/>
    <property type="project" value="ARUK-UCL"/>
</dbReference>
<dbReference type="GO" id="GO:0006812">
    <property type="term" value="P:monoatomic cation transport"/>
    <property type="evidence" value="ECO:0007669"/>
    <property type="project" value="Ensembl"/>
</dbReference>
<dbReference type="GO" id="GO:0006836">
    <property type="term" value="P:neurotransmitter transport"/>
    <property type="evidence" value="ECO:0000314"/>
    <property type="project" value="ARUK-UCL"/>
</dbReference>
<dbReference type="GO" id="GO:0015874">
    <property type="term" value="P:norepinephrine transport"/>
    <property type="evidence" value="ECO:0000314"/>
    <property type="project" value="UniProtKB"/>
</dbReference>
<dbReference type="GO" id="GO:0051620">
    <property type="term" value="P:norepinephrine uptake"/>
    <property type="evidence" value="ECO:0000314"/>
    <property type="project" value="ARUK-UCL"/>
</dbReference>
<dbReference type="GO" id="GO:0015695">
    <property type="term" value="P:organic cation transport"/>
    <property type="evidence" value="ECO:0000314"/>
    <property type="project" value="MGI"/>
</dbReference>
<dbReference type="GO" id="GO:0015732">
    <property type="term" value="P:prostaglandin transport"/>
    <property type="evidence" value="ECO:0000314"/>
    <property type="project" value="UniProtKB"/>
</dbReference>
<dbReference type="GO" id="GO:0072530">
    <property type="term" value="P:purine-containing compound transmembrane transport"/>
    <property type="evidence" value="ECO:0000304"/>
    <property type="project" value="Reactome"/>
</dbReference>
<dbReference type="GO" id="GO:0015847">
    <property type="term" value="P:putrescine transport"/>
    <property type="evidence" value="ECO:0000314"/>
    <property type="project" value="UniProtKB"/>
</dbReference>
<dbReference type="GO" id="GO:0006837">
    <property type="term" value="P:serotonin transport"/>
    <property type="evidence" value="ECO:0000314"/>
    <property type="project" value="UniProtKB"/>
</dbReference>
<dbReference type="GO" id="GO:0051610">
    <property type="term" value="P:serotonin uptake"/>
    <property type="evidence" value="ECO:0000314"/>
    <property type="project" value="ARUK-UCL"/>
</dbReference>
<dbReference type="GO" id="GO:0015848">
    <property type="term" value="P:spermidine transport"/>
    <property type="evidence" value="ECO:0000250"/>
    <property type="project" value="UniProtKB"/>
</dbReference>
<dbReference type="GO" id="GO:0071934">
    <property type="term" value="P:thiamine transmembrane transport"/>
    <property type="evidence" value="ECO:0000314"/>
    <property type="project" value="UniProtKB"/>
</dbReference>
<dbReference type="GO" id="GO:0150104">
    <property type="term" value="P:transport across blood-brain barrier"/>
    <property type="evidence" value="ECO:0000303"/>
    <property type="project" value="ARUK-UCL"/>
</dbReference>
<dbReference type="GO" id="GO:0042908">
    <property type="term" value="P:xenobiotic transport"/>
    <property type="evidence" value="ECO:0000314"/>
    <property type="project" value="ARUK-UCL"/>
</dbReference>
<dbReference type="GO" id="GO:1990962">
    <property type="term" value="P:xenobiotic transport across blood-brain barrier"/>
    <property type="evidence" value="ECO:0000303"/>
    <property type="project" value="ARUK-UCL"/>
</dbReference>
<dbReference type="CDD" id="cd17379">
    <property type="entry name" value="MFS_SLC22A1_2_3"/>
    <property type="match status" value="1"/>
</dbReference>
<dbReference type="FunFam" id="1.20.1250.20:FF:000148">
    <property type="entry name" value="Solute carrier family 22 member 2"/>
    <property type="match status" value="1"/>
</dbReference>
<dbReference type="Gene3D" id="1.20.1250.20">
    <property type="entry name" value="MFS general substrate transporter like domains"/>
    <property type="match status" value="1"/>
</dbReference>
<dbReference type="InterPro" id="IPR020846">
    <property type="entry name" value="MFS_dom"/>
</dbReference>
<dbReference type="InterPro" id="IPR005828">
    <property type="entry name" value="MFS_sugar_transport-like"/>
</dbReference>
<dbReference type="InterPro" id="IPR036259">
    <property type="entry name" value="MFS_trans_sf"/>
</dbReference>
<dbReference type="InterPro" id="IPR004749">
    <property type="entry name" value="Orgcat_transp/SVOP"/>
</dbReference>
<dbReference type="InterPro" id="IPR005829">
    <property type="entry name" value="Sugar_transporter_CS"/>
</dbReference>
<dbReference type="NCBIfam" id="TIGR00898">
    <property type="entry name" value="2A0119"/>
    <property type="match status" value="1"/>
</dbReference>
<dbReference type="PANTHER" id="PTHR24064">
    <property type="entry name" value="SOLUTE CARRIER FAMILY 22 MEMBER"/>
    <property type="match status" value="1"/>
</dbReference>
<dbReference type="Pfam" id="PF00083">
    <property type="entry name" value="Sugar_tr"/>
    <property type="match status" value="1"/>
</dbReference>
<dbReference type="SUPFAM" id="SSF103473">
    <property type="entry name" value="MFS general substrate transporter"/>
    <property type="match status" value="1"/>
</dbReference>
<dbReference type="PROSITE" id="PS50850">
    <property type="entry name" value="MFS"/>
    <property type="match status" value="1"/>
</dbReference>
<dbReference type="PROSITE" id="PS00216">
    <property type="entry name" value="SUGAR_TRANSPORT_1"/>
    <property type="match status" value="2"/>
</dbReference>
<comment type="function">
    <text evidence="2 4 6 8 9 11 14 15 19 20 23 26 27 28 31 32 40">Electrogenic voltage-dependent transporter that mediates the transport of a variety of organic cations such as endogenous bioactive amines, cationic drugs and xenobiotics (PubMed:9260930, PubMed:9687576). Functions as a Na(+)-independent, bidirectional uniporter (PubMed:21128598, PubMed:9687576). Cation cellular uptake or release is driven by the electrochemical potential, i.e. membrane potential and concentration gradient (PubMed:15212162, PubMed:9260930, PubMed:9687576). However, may also engage electroneutral cation exchange when saturating concentrations of cation substrates are reached (By similarity). Predominantly expressed at the basolateral membrane of hepatocytes and proximal tubules and involved in the uptake and disposition of cationic compounds by hepatic and renal clearance from the blood flow (PubMed:15783073). Implicated in monoamine neurotransmitters uptake such as histamine, dopamine, adrenaline/epinephrine, noradrenaline/norepinephrine, serotonin and tyramine, thereby supporting a physiological role in the central nervous system by regulating interstitial concentrations of neurotransmitters (PubMed:16581093, PubMed:17460754, PubMed:9687576). Also capable of transporting dopaminergic neuromodulators cyclo(his-pro), salsolinol and N-methyl-salsolinol, thereby involved in the maintenance of dopaminergic cell integrity in the central nervous system (PubMed:17460754). Mediates the bidirectional transport of acetylcholine (ACh) at the apical membrane of ciliated cell in airway epithelium, thereby playing a role in luminal release of ACh from bronchial epithelium (PubMed:15817714). Also transports guanidine and endogenous monoamines such as vitamin B1/thiamine, creatinine and N-1-methylnicotinamide (NMN) (PubMed:12089365, PubMed:15212162, PubMed:17072098, PubMed:24961373, PubMed:9260930). Mediates the uptake and efflux of quaternary ammonium compound choline (PubMed:9260930). Mediates the bidirectional transport of polyamine agmatine and the uptake of polyamines putrescine and spermidine (PubMed:12538837, PubMed:21128598). Able to transport non-amine endogenous compounds such as prostaglandin E2 (PGE2) and prostaglandin F2-alpha (PGF2-alpha) (PubMed:11907186). Also involved in the uptake of xenobiotic 4-(4-(dimethylamino)styryl)-N-methylpyridinium (ASP) (PubMed:12395288, PubMed:16394027). May contribute to regulate the transport of organic compounds in testis across the blood-testis-barrier (Probable).</text>
</comment>
<comment type="function">
    <molecule>Isoform 2</molecule>
    <text evidence="6 11 17">In contrast with isoform 1, not able to transport guanidine, creatinine, cimetidine and metformin.</text>
</comment>
<comment type="catalytic activity">
    <reaction evidence="20 32">
        <text>(R)-noradrenaline(out) = (R)-noradrenaline(in)</text>
        <dbReference type="Rhea" id="RHEA:73871"/>
        <dbReference type="ChEBI" id="CHEBI:72587"/>
    </reaction>
</comment>
<comment type="catalytic activity">
    <reaction evidence="20">
        <text>(R)-adrenaline(out) = (R)-adrenaline(in)</text>
        <dbReference type="Rhea" id="RHEA:73875"/>
        <dbReference type="ChEBI" id="CHEBI:71406"/>
    </reaction>
</comment>
<comment type="catalytic activity">
    <reaction evidence="20 32">
        <text>serotonin(out) = serotonin(in)</text>
        <dbReference type="Rhea" id="RHEA:73867"/>
        <dbReference type="ChEBI" id="CHEBI:350546"/>
    </reaction>
</comment>
<comment type="catalytic activity">
    <reaction evidence="20 32">
        <text>dopamine(out) = dopamine(in)</text>
        <dbReference type="Rhea" id="RHEA:73863"/>
        <dbReference type="ChEBI" id="CHEBI:59905"/>
    </reaction>
</comment>
<comment type="catalytic activity">
    <reaction evidence="20 26 32">
        <text>histamine(out) = histamine(in)</text>
        <dbReference type="Rhea" id="RHEA:73879"/>
        <dbReference type="ChEBI" id="CHEBI:58432"/>
    </reaction>
</comment>
<comment type="catalytic activity">
    <reaction evidence="28">
        <text>thiamine(in) = thiamine(out)</text>
        <dbReference type="Rhea" id="RHEA:34919"/>
        <dbReference type="ChEBI" id="CHEBI:18385"/>
    </reaction>
</comment>
<comment type="catalytic activity">
    <reaction evidence="11 23">
        <text>creatinine(in) = creatinine(out)</text>
        <dbReference type="Rhea" id="RHEA:74539"/>
        <dbReference type="ChEBI" id="CHEBI:16737"/>
    </reaction>
</comment>
<comment type="catalytic activity">
    <reaction evidence="31">
        <text>1-methylnicotinamide(out) = 1-methylnicotinamide(in)</text>
        <dbReference type="Rhea" id="RHEA:73859"/>
        <dbReference type="ChEBI" id="CHEBI:16797"/>
    </reaction>
</comment>
<comment type="catalytic activity">
    <reaction evidence="6">
        <text>guanidine(out) = guanidine(in)</text>
        <dbReference type="Rhea" id="RHEA:73883"/>
        <dbReference type="ChEBI" id="CHEBI:30087"/>
    </reaction>
</comment>
<comment type="catalytic activity">
    <reaction evidence="31">
        <text>choline(out) = choline(in)</text>
        <dbReference type="Rhea" id="RHEA:32751"/>
        <dbReference type="ChEBI" id="CHEBI:15354"/>
    </reaction>
</comment>
<comment type="catalytic activity">
    <reaction evidence="9 27">
        <text>agmatine(out) = agmatine(in)</text>
        <dbReference type="Rhea" id="RHEA:72131"/>
        <dbReference type="ChEBI" id="CHEBI:58145"/>
    </reaction>
    <physiologicalReaction direction="left-to-right" evidence="39">
        <dbReference type="Rhea" id="RHEA:72132"/>
    </physiologicalReaction>
    <physiologicalReaction direction="right-to-left" evidence="39">
        <dbReference type="Rhea" id="RHEA:72133"/>
    </physiologicalReaction>
</comment>
<comment type="catalytic activity">
    <reaction evidence="27">
        <text>putrescine(out) = putrescine(in)</text>
        <dbReference type="Rhea" id="RHEA:72135"/>
        <dbReference type="ChEBI" id="CHEBI:326268"/>
    </reaction>
</comment>
<comment type="catalytic activity">
    <reaction evidence="1">
        <text>spermidine(in) = spermidine(out)</text>
        <dbReference type="Rhea" id="RHEA:35039"/>
        <dbReference type="ChEBI" id="CHEBI:57834"/>
    </reaction>
</comment>
<comment type="catalytic activity">
    <reaction evidence="26">
        <text>tyramine(in) = tyramine(out)</text>
        <dbReference type="Rhea" id="RHEA:74783"/>
        <dbReference type="ChEBI" id="CHEBI:327995"/>
    </reaction>
</comment>
<comment type="catalytic activity">
    <reaction evidence="26">
        <text>L-histidyl-L-proline diketopiperazine(in) = L-histidyl-L-proline diketopiperazine(out)</text>
        <dbReference type="Rhea" id="RHEA:74787"/>
        <dbReference type="ChEBI" id="CHEBI:90039"/>
    </reaction>
</comment>
<comment type="catalytic activity">
    <reaction evidence="26">
        <text>(R)-salsolinol(in) = (R)-salsolinol(out)</text>
        <dbReference type="Rhea" id="RHEA:74791"/>
        <dbReference type="ChEBI" id="CHEBI:194082"/>
    </reaction>
</comment>
<comment type="catalytic activity">
    <reaction evidence="26">
        <text>N-methyl-(R)-salsolinol(in) = N-methyl-(R)-salsolinol(out)</text>
        <dbReference type="Rhea" id="RHEA:74795"/>
        <dbReference type="ChEBI" id="CHEBI:194083"/>
    </reaction>
</comment>
<comment type="catalytic activity">
    <reaction evidence="15">
        <text>acetylcholine(in) = acetylcholine(out)</text>
        <dbReference type="Rhea" id="RHEA:74663"/>
        <dbReference type="ChEBI" id="CHEBI:15355"/>
    </reaction>
</comment>
<comment type="catalytic activity">
    <reaction evidence="4">
        <text>prostaglandin F2alpha(out) = prostaglandin F2alpha(in)</text>
        <dbReference type="Rhea" id="RHEA:50988"/>
        <dbReference type="ChEBI" id="CHEBI:57404"/>
    </reaction>
</comment>
<comment type="catalytic activity">
    <reaction evidence="4">
        <text>prostaglandin E2(out) = prostaglandin E2(in)</text>
        <dbReference type="Rhea" id="RHEA:50984"/>
        <dbReference type="ChEBI" id="CHEBI:606564"/>
    </reaction>
</comment>
<comment type="activity regulation">
    <text evidence="8 29">Tyrosine phosphorylation of the transporter leads to activation of the transport activity (PubMed:26979622). TEA uptake is activated by tyrosine phosphorylation (PubMed:26979622). Inhibited by cGMP, most likely through a cGMP-binding protein that interacts with OCT2 (PubMed:12395288).</text>
</comment>
<comment type="biophysicochemical properties">
    <kinetics>
        <KM evidence="26">74 uM for cyclo(his-pro)</KM>
        <KM evidence="32">80 uM for serotonin</KM>
        <KM evidence="20">290 uM for serotonin</KM>
        <KM evidence="26">130 uM for salsolinol</KM>
        <KM evidence="15">150 uM for acetylcholine</KM>
        <KM evidence="31">210 uM for choline</KM>
        <KM evidence="31">300 uM for NMN</KM>
        <KM evidence="32">390 uM for dopamine</KM>
        <KM evidence="20">420 uM for adrenaline</KM>
        <KM evidence="28">750 uM for thiamine</KM>
        <KM evidence="20">940 uM for histamine</KM>
        <KM evidence="32">1300 uM for histamine</KM>
        <KM evidence="20">1400 uM for dopamine</KM>
        <KM evidence="20">1500 uM for noradrenaline</KM>
        <KM evidence="32">1900 uM for noradrenaline</KM>
        <KM evidence="11">4000 uM for creatinine</KM>
        <KM evidence="27">19010 uM for agmatine (at pH 6.0)</KM>
        <KM evidence="9">1400 uM for agmatine (at pH 7.4)</KM>
        <KM evidence="27">1840 uM for agmatine (at pH 7.4)</KM>
        <KM evidence="27">740 uM for agmatine (at pH 8.5)</KM>
        <KM evidence="27">390 uM for agmatine (at pH 9.5)</KM>
        <KM evidence="27">33450 uM for putrescine (at pH 6.0)</KM>
        <KM evidence="27">11290 uM for putrescine (at pH 7.4)</KM>
        <KM evidence="27">3600 uM for putrescine (at pH 8.5)</KM>
        <KM evidence="27">1410 uM for putrescine (at pH 9.5)</KM>
        <KM evidence="4">0.0289 uM for prostaglandin E2</KM>
        <KM evidence="4">0.334 uM for prostaglandin F2-alpha</KM>
        <KM evidence="31">19 uM for MPP</KM>
        <KM evidence="19">24 uM for ASP (at 8 degrees Celsius)</KM>
        <Vmax evidence="26">3.0 nmol/min/mg enzyme for cyclo(his-pro) uptake</Vmax>
        <Vmax evidence="26">2.7 nmol/min/mg enzyme for salsolinol uptake</Vmax>
        <Vmax evidence="28">4.56 nmol/min/mg enzyme for thiamine uptake</Vmax>
        <Vmax evidence="27">23.5 nmol/min/mg enzyme for creatinine uptake</Vmax>
        <Vmax evidence="27">24.1 nmol/min/mg enzyme for agmatine uptake (at pH 6.0)</Vmax>
        <Vmax evidence="9">11.5 nmol/min/mg enzyme for agmatine uptake (at pH 7.4)</Vmax>
        <Vmax evidence="27">12.9 nmol/min/mg enzyme for agmatine uptake (at pH 7.4)</Vmax>
        <Vmax evidence="27">13.9 nmol/min/mg enzyme for agmatine uptake (at pH 8.5)</Vmax>
        <Vmax evidence="27">16.0 nmol/min/mg enzyme for agmatine uptake (at pH 9.5)</Vmax>
        <Vmax evidence="27">24.9 nmol/min/mg enzyme for putrescine uptake (at pH 6.0)</Vmax>
        <Vmax evidence="27">15.6 nmol/min/mg enzyme for putrescine uptake (at pH 7.4)</Vmax>
        <Vmax evidence="27">38.9 nmol/min/mg enzyme for putrescine uptake (at pH 8.5)</Vmax>
        <Vmax evidence="27">52.3 nmol/min/mg enzyme for putrescine uptake (at pH 9.5)</Vmax>
    </kinetics>
    <phDependence>
        <text evidence="27">Optimum pH is 9 for agmatine and putrescine uptake.</text>
    </phDependence>
</comment>
<comment type="subcellular location">
    <subcellularLocation>
        <location evidence="2">Basolateral cell membrane</location>
        <topology evidence="38">Multi-pass membrane protein</topology>
    </subcellularLocation>
    <subcellularLocation>
        <location evidence="30">Basal cell membrane</location>
        <topology evidence="38">Multi-pass membrane protein</topology>
    </subcellularLocation>
    <subcellularLocation>
        <location evidence="15 31">Apical cell membrane</location>
        <topology evidence="38">Multi-pass membrane protein</topology>
    </subcellularLocation>
    <text evidence="5 15 30 31">Localized to the basal membrane of Sertoli cells (PubMed:35307651). Localized to the basolateral membrane of proximal tubule (PubMed:11912245). Localized to the luminal/apical membrane of distal tubule (PubMed:9260930). Localized to the luminal/apical membrane of ciliated epithelial cells in bronchi (PubMed:15817714).</text>
</comment>
<comment type="alternative products">
    <event type="alternative splicing"/>
    <isoform>
        <id>O15244-1</id>
        <name>1</name>
        <sequence type="displayed"/>
    </isoform>
    <isoform>
        <id>O15244-2</id>
        <name>2</name>
        <name>OCT2-A</name>
        <sequence type="described" ref="VSP_031773 VSP_031774"/>
    </isoform>
    <isoform>
        <id>O15244-3</id>
        <name>3</name>
        <sequence type="described" ref="VSP_031771 VSP_031772"/>
    </isoform>
</comment>
<comment type="tissue specificity">
    <text evidence="5 6 15 25 26 30 31 32">Mainly expressed in kidney, in the cortex and medulla (PubMed:11912245, PubMed:12089365, PubMed:9260930). Localized in testis, mostly to peritubular myoid cells and Leydig cells and also detected along the basal membrane of Sertoli cells (PubMed:12089365, PubMed:35307651). Expressed in brain, in neurons of the cerebral cortex and in various subcortical nuclei (PubMed:12089365, PubMed:9260930, PubMed:9687576). In the brain, also detected in the dopaminergic regions of the substantia nigra (PubMed:17460754). Expressed in tracheal and bronchial ciliated epithelium in the respiratory tract (PubMed:15817714). Also detected in secretory phase endometrium, in scattered stromal cells (PubMed:17393420). Expressed in spleen, placenta, small intestine and spinal cord (PubMed:12089365, PubMed:9260930). Weakly expressed in prostate, uterus and lung (PubMed:12089365).</text>
</comment>
<comment type="tissue specificity">
    <molecule>Isoform 2</molecule>
    <text evidence="6">Mainly expressed in kidney, bone marrow and testis (PubMed:12089365). Expressed in colon, skeletal muscle, spinal cord, placenta and liver (PubMed:12089365).</text>
</comment>
<comment type="induction">
    <text evidence="18">May be down-regulated in diabetic patients.</text>
</comment>
<comment type="domain">
    <text evidence="29">Contains one proline-rich sequence (Pro-Glu-Ser-Pro-Arg) that may be involved in tyrosine-protein kinase YES1 binding and is required for the activation of substrate transport.</text>
</comment>
<comment type="PTM">
    <text evidence="29">Tyrosine phosphorylated by tyrosine-protein kinase YES1.</text>
</comment>
<comment type="miscellaneous">
    <text evidence="2 6 13 14 16 17 18 19 20 21 22 28 31 32 33 36">Mediates the renal secretion of many clinically used cationic drugs (PubMed:12089365, PubMed:16272756). Transports drugs such as diabetes treatment medicine metformin, 1-methyl-4-phenylpyridinium (MPP(+)), famotidine, ranitidine, amantadine, acriflavine, amiloride, memantine, cimetidine, platinum-based drugs cisplatin and oxaliplatin, 3'-azido-3'-deoxythymidine (AZT) and tetraethylammonium (TEA) (PubMed:12089365, PubMed:15496291, PubMed:15783073, PubMed:16006492, PubMed:16272756, PubMed:16314463, PubMed:16394027, PubMed:16581093, PubMed:16914559, PubMed:16951202, PubMed:24961373, PubMed:9260930). Mediates the bidirectional transport of MPP(+) (PubMed:12089365, PubMed:9260930, PubMed:9687576). Metformin competitively inhibits OCT1-mediated thiamine uptake, leading to a decrease in hepatic steatosis (PubMed:24961373). Plays a predominant role in the anticancer activity of cisplatin and oxaliplatin and may contribute to antitumor specificity (PubMed:16914559, PubMed:16951202). Involved in cisplatin-induced nephrotoxicity (By similarity).</text>
</comment>
<comment type="similarity">
    <text evidence="38">Belongs to the major facilitator (TC 2.A.1) superfamily. Organic cation transporter (TC 2.A.1.19) family.</text>
</comment>
<comment type="caution">
    <text evidence="5 31">Most authors have deduced a localization at the basolateral membrane of proximal tubules (PubMed:11912245). Other studies demonstrated a localization to the luminal membrane in the distal tubule (PubMed:9260930).</text>
</comment>
<evidence type="ECO:0000250" key="1">
    <source>
        <dbReference type="UniProtKB" id="O70577"/>
    </source>
</evidence>
<evidence type="ECO:0000250" key="2">
    <source>
        <dbReference type="UniProtKB" id="Q9R0W2"/>
    </source>
</evidence>
<evidence type="ECO:0000255" key="3"/>
<evidence type="ECO:0000269" key="4">
    <source>
    </source>
</evidence>
<evidence type="ECO:0000269" key="5">
    <source>
    </source>
</evidence>
<evidence type="ECO:0000269" key="6">
    <source>
    </source>
</evidence>
<evidence type="ECO:0000269" key="7">
    <source>
    </source>
</evidence>
<evidence type="ECO:0000269" key="8">
    <source>
    </source>
</evidence>
<evidence type="ECO:0000269" key="9">
    <source>
    </source>
</evidence>
<evidence type="ECO:0000269" key="10">
    <source>
    </source>
</evidence>
<evidence type="ECO:0000269" key="11">
    <source>
    </source>
</evidence>
<evidence type="ECO:0000269" key="12">
    <source>
    </source>
</evidence>
<evidence type="ECO:0000269" key="13">
    <source>
    </source>
</evidence>
<evidence type="ECO:0000269" key="14">
    <source>
    </source>
</evidence>
<evidence type="ECO:0000269" key="15">
    <source>
    </source>
</evidence>
<evidence type="ECO:0000269" key="16">
    <source>
    </source>
</evidence>
<evidence type="ECO:0000269" key="17">
    <source>
    </source>
</evidence>
<evidence type="ECO:0000269" key="18">
    <source>
    </source>
</evidence>
<evidence type="ECO:0000269" key="19">
    <source>
    </source>
</evidence>
<evidence type="ECO:0000269" key="20">
    <source>
    </source>
</evidence>
<evidence type="ECO:0000269" key="21">
    <source>
    </source>
</evidence>
<evidence type="ECO:0000269" key="22">
    <source>
    </source>
</evidence>
<evidence type="ECO:0000269" key="23">
    <source>
    </source>
</evidence>
<evidence type="ECO:0000269" key="24">
    <source>
    </source>
</evidence>
<evidence type="ECO:0000269" key="25">
    <source>
    </source>
</evidence>
<evidence type="ECO:0000269" key="26">
    <source>
    </source>
</evidence>
<evidence type="ECO:0000269" key="27">
    <source>
    </source>
</evidence>
<evidence type="ECO:0000269" key="28">
    <source>
    </source>
</evidence>
<evidence type="ECO:0000269" key="29">
    <source>
    </source>
</evidence>
<evidence type="ECO:0000269" key="30">
    <source>
    </source>
</evidence>
<evidence type="ECO:0000269" key="31">
    <source>
    </source>
</evidence>
<evidence type="ECO:0000269" key="32">
    <source>
    </source>
</evidence>
<evidence type="ECO:0000303" key="33">
    <source>
    </source>
</evidence>
<evidence type="ECO:0000303" key="34">
    <source>
    </source>
</evidence>
<evidence type="ECO:0000303" key="35">
    <source>
    </source>
</evidence>
<evidence type="ECO:0000303" key="36">
    <source>
    </source>
</evidence>
<evidence type="ECO:0000303" key="37">
    <source>
    </source>
</evidence>
<evidence type="ECO:0000305" key="38"/>
<evidence type="ECO:0000305" key="39">
    <source>
    </source>
</evidence>
<evidence type="ECO:0000305" key="40">
    <source>
    </source>
</evidence>
<evidence type="ECO:0000312" key="41">
    <source>
        <dbReference type="HGNC" id="HGNC:10966"/>
    </source>
</evidence>
<proteinExistence type="evidence at protein level"/>
<feature type="chain" id="PRO_0000320957" description="Solute carrier family 22 member 2">
    <location>
        <begin position="1"/>
        <end position="555"/>
    </location>
</feature>
<feature type="topological domain" description="Cytoplasmic" evidence="3">
    <location>
        <begin position="1"/>
        <end position="22"/>
    </location>
</feature>
<feature type="transmembrane region" description="Helical" evidence="3">
    <location>
        <begin position="23"/>
        <end position="43"/>
    </location>
</feature>
<feature type="topological domain" description="Extracellular" evidence="3">
    <location>
        <begin position="44"/>
        <end position="150"/>
    </location>
</feature>
<feature type="transmembrane region" description="Helical" evidence="3">
    <location>
        <begin position="151"/>
        <end position="171"/>
    </location>
</feature>
<feature type="topological domain" description="Cytoplasmic" evidence="3">
    <location>
        <begin position="172"/>
        <end position="177"/>
    </location>
</feature>
<feature type="transmembrane region" description="Helical" evidence="3">
    <location>
        <begin position="178"/>
        <end position="198"/>
    </location>
</feature>
<feature type="topological domain" description="Extracellular" evidence="3">
    <location>
        <begin position="199"/>
        <end position="208"/>
    </location>
</feature>
<feature type="transmembrane region" description="Helical" evidence="3">
    <location>
        <begin position="209"/>
        <end position="229"/>
    </location>
</feature>
<feature type="topological domain" description="Cytoplasmic" evidence="3">
    <location>
        <begin position="230"/>
        <end position="238"/>
    </location>
</feature>
<feature type="transmembrane region" description="Helical" evidence="3">
    <location>
        <begin position="239"/>
        <end position="259"/>
    </location>
</feature>
<feature type="topological domain" description="Extracellular" evidence="3">
    <location>
        <begin position="260"/>
        <end position="263"/>
    </location>
</feature>
<feature type="transmembrane region" description="Helical" evidence="3">
    <location>
        <begin position="264"/>
        <end position="284"/>
    </location>
</feature>
<feature type="topological domain" description="Cytoplasmic" evidence="3">
    <location>
        <begin position="285"/>
        <end position="348"/>
    </location>
</feature>
<feature type="transmembrane region" description="Helical" evidence="3">
    <location>
        <begin position="349"/>
        <end position="369"/>
    </location>
</feature>
<feature type="topological domain" description="Extracellular" evidence="3">
    <location>
        <begin position="370"/>
        <end position="375"/>
    </location>
</feature>
<feature type="transmembrane region" description="Helical" evidence="3">
    <location>
        <begin position="376"/>
        <end position="396"/>
    </location>
</feature>
<feature type="topological domain" description="Cytoplasmic" evidence="3">
    <location>
        <begin position="397"/>
        <end position="414"/>
    </location>
</feature>
<feature type="transmembrane region" description="Helical" evidence="3">
    <location>
        <begin position="415"/>
        <end position="435"/>
    </location>
</feature>
<feature type="topological domain" description="Extracellular" evidence="3">
    <location>
        <begin position="436"/>
        <end position="441"/>
    </location>
</feature>
<feature type="transmembrane region" description="Helical" evidence="3">
    <location>
        <begin position="442"/>
        <end position="462"/>
    </location>
</feature>
<feature type="topological domain" description="Cytoplasmic" evidence="3">
    <location>
        <begin position="463"/>
        <end position="464"/>
    </location>
</feature>
<feature type="transmembrane region" description="Helical" evidence="3">
    <location>
        <begin position="465"/>
        <end position="485"/>
    </location>
</feature>
<feature type="topological domain" description="Extracellular" evidence="3">
    <location>
        <begin position="486"/>
        <end position="494"/>
    </location>
</feature>
<feature type="transmembrane region" description="Helical" evidence="3">
    <location>
        <begin position="495"/>
        <end position="515"/>
    </location>
</feature>
<feature type="topological domain" description="Cytoplasmic" evidence="3">
    <location>
        <begin position="516"/>
        <end position="555"/>
    </location>
</feature>
<feature type="short sequence motif" description="Proline-rich sequence" evidence="29">
    <location>
        <begin position="284"/>
        <end position="288"/>
    </location>
</feature>
<feature type="site" description="Involved in recognition of organic cations and participates in structural changes that occur during translocation of organic cations" evidence="2">
    <location>
        <position position="451"/>
    </location>
</feature>
<feature type="glycosylation site" description="N-linked (GlcNAc...) asparagine" evidence="3">
    <location>
        <position position="72"/>
    </location>
</feature>
<feature type="splice variant" id="VSP_031771" description="In isoform 3." evidence="35">
    <original>ITEFVGRRYRRTVGIFYQ</original>
    <variation>SKNVCACNCENKATSLPK</variation>
    <location>
        <begin position="225"/>
        <end position="242"/>
    </location>
</feature>
<feature type="splice variant" id="VSP_031772" description="In isoform 3." evidence="35">
    <location>
        <begin position="243"/>
        <end position="555"/>
    </location>
</feature>
<feature type="splice variant" id="VSP_031773" description="In isoform 2." evidence="33">
    <original>DLQWLKIIISCLGRMGITMAYEIVCLVNAELYPTFIRNLGVHICSSMCDIGGIITPF</original>
    <variation>GKFQVKLESYLQDPGERECHGPLIGKPCNLSSKSIWKDKLEGSIWDPSEQIHMASLL</variation>
    <location>
        <begin position="427"/>
        <end position="483"/>
    </location>
</feature>
<feature type="splice variant" id="VSP_031774" description="In isoform 2." evidence="33">
    <location>
        <begin position="484"/>
        <end position="555"/>
    </location>
</feature>
<feature type="sequence variant" id="VAR_039322" description="In dbSNP:rs8177504." evidence="7">
    <original>P</original>
    <variation>S</variation>
    <location>
        <position position="54"/>
    </location>
</feature>
<feature type="sequence variant" id="VAR_039323" description="Lower Vmax for MPP(+) transport; no change in transport efficiency (Vmax/Km) and clearance of cyclo(his-pro) and salsolinol; dbSNP:rs8177507." evidence="7 26">
    <original>M</original>
    <variation>I</variation>
    <location>
        <position position="165"/>
    </location>
</feature>
<feature type="sequence variant" id="VAR_039324" description="In dbSNP:rs145450955." evidence="24">
    <original>T</original>
    <variation>M</variation>
    <location>
        <position position="201"/>
    </location>
</feature>
<feature type="sequence variant" id="VAR_039325" description="Decreased Ki value for TBA inhibition of MPP(+); no change in transport efficiency (Vmax/Km) and clearance of cyclo(his-pro) and salsolinol; dbSNP:rs316019." evidence="6 7 10 12 24 26 31">
    <original>S</original>
    <variation>A</variation>
    <location>
        <position position="270"/>
    </location>
</feature>
<feature type="sequence variant" id="VAR_039326" description="In dbSNP:rs8177513.">
    <original>A</original>
    <variation>G</variation>
    <location>
        <position position="297"/>
    </location>
</feature>
<feature type="sequence variant" id="VAR_039327" description="Lower Vmax and reduced Ki value for TBA inhibition of MPP(+); lower transport efficiency (Vmax/Km) and clearance of cyclo(his-pro); no change in transport efficiency (Vmax/Km) and clearance of salsolinol; dbSNP:rs8177516." evidence="7 26">
    <original>R</original>
    <variation>C</variation>
    <location>
        <position position="400"/>
    </location>
</feature>
<feature type="sequence variant" id="VAR_039328" description="Lower Km value for MPP(+) and reduced Ki value for TBA inhibition of MPP; no change in transport efficiency (Vmax/Km) and clearance of cyclo(his-pro) and salsolinol; dbSNP:rs8177517." evidence="7 26">
    <original>K</original>
    <variation>Q</variation>
    <location>
        <position position="432"/>
    </location>
</feature>
<feature type="sequence variant" id="VAR_039329" description="In dbSNP:rs3907239.">
    <original>R</original>
    <variation>K</variation>
    <location>
        <position position="463"/>
    </location>
</feature>
<feature type="mutagenesis site" description="No change in TEA uptake." evidence="29">
    <original>Y</original>
    <variation>F</variation>
    <location>
        <position position="73"/>
    </location>
</feature>
<feature type="mutagenesis site" description="No change in TEA uptake." evidence="29">
    <original>Y</original>
    <variation>F</variation>
    <location>
        <position position="92"/>
    </location>
</feature>
<feature type="mutagenesis site" description="No change in TEA uptake." evidence="29">
    <original>Y</original>
    <variation>F</variation>
    <location>
        <position position="128"/>
    </location>
</feature>
<feature type="mutagenesis site" description="No change in TEA uptake." evidence="29">
    <original>Y</original>
    <variation>F</variation>
    <location>
        <position position="169"/>
    </location>
</feature>
<feature type="mutagenesis site" description="Slight decrease in TEA uptake. No change in tyrosine phosphorylation. Strong decrease in TEA uptake; when associated with F-362. Strong decrease in TEA and metformin uptake and YES1-mediated tyrosine phosphorylation; when associated with F-362 and F-377." evidence="29">
    <original>Y</original>
    <variation>F</variation>
    <location>
        <position position="241"/>
    </location>
</feature>
<feature type="mutagenesis site" description="No change in TEA uptake." evidence="29">
    <original>Y</original>
    <variation>F</variation>
    <location>
        <position position="257"/>
    </location>
</feature>
<feature type="mutagenesis site" description="No change in TEA uptake." evidence="29">
    <original>Y</original>
    <variation>F</variation>
    <location>
        <position position="279"/>
    </location>
</feature>
<feature type="mutagenesis site" description="No change in TEA uptake." evidence="29">
    <original>Y</original>
    <variation>F</variation>
    <location>
        <position position="280"/>
    </location>
</feature>
<feature type="mutagenesis site" description="Decreased TEA and metformin uptake. Decreased tyrosine phosphorylation." evidence="29">
    <original>P</original>
    <variation>A</variation>
    <location>
        <position position="284"/>
    </location>
</feature>
<feature type="mutagenesis site" description="No change in TEA and metformin uptake. No change in tyrosine phosphorylation." evidence="29">
    <original>S</original>
    <variation>A</variation>
    <location>
        <position position="286"/>
    </location>
</feature>
<feature type="mutagenesis site" description="Decreased TEA and metformin uptake. Decreased tyrosine phosphorylation." evidence="29">
    <original>P</original>
    <variation>A</variation>
    <location>
        <position position="287"/>
    </location>
</feature>
<feature type="mutagenesis site" description="Decreased TEA uptake and YES1-mediated tyrosine phosphorylation. Strong decrease in TEA uptake; when associated with F-241. Strong decrease in TEA uptake; when associated with F-377. Strong decrease in TEA and metformin uptake and YES1-mediated tyrosine phosphorylation; when associated with F-241 and F-377." evidence="29">
    <original>Y</original>
    <variation>F</variation>
    <location>
        <position position="362"/>
    </location>
</feature>
<feature type="mutagenesis site" description="Slight decrease in TEA uptake. No change in tyrosine phosphorylation. Strong decrease in TEA uptake; when associated with F-362. Strong decrease in TEA and metformin uptake and YES1-mediated tyrosine phosphorylation; when associated with F-241 and F-362." evidence="29">
    <original>Y</original>
    <variation>F</variation>
    <location>
        <position position="377"/>
    </location>
</feature>
<feature type="mutagenesis site" description="No change in TEA uptake." evidence="29">
    <original>Y</original>
    <variation>F</variation>
    <location>
        <position position="458"/>
    </location>
</feature>
<feature type="mutagenesis site" description="No change in TEA uptake." evidence="29">
    <original>Y</original>
    <variation>F</variation>
    <location>
        <position position="544"/>
    </location>
</feature>
<accession>O15244</accession>
<accession>Q5T7Q6</accession>
<accession>Q6PIQ8</accession>
<accession>Q8NG62</accession>
<accession>Q9NQB9</accession>
<keyword id="KW-0002">3D-structure</keyword>
<keyword id="KW-0025">Alternative splicing</keyword>
<keyword id="KW-1003">Cell membrane</keyword>
<keyword id="KW-0325">Glycoprotein</keyword>
<keyword id="KW-0406">Ion transport</keyword>
<keyword id="KW-0472">Membrane</keyword>
<keyword id="KW-0597">Phosphoprotein</keyword>
<keyword id="KW-1267">Proteomics identification</keyword>
<keyword id="KW-1185">Reference proteome</keyword>
<keyword id="KW-0812">Transmembrane</keyword>
<keyword id="KW-1133">Transmembrane helix</keyword>
<keyword id="KW-0813">Transport</keyword>
<reference key="1">
    <citation type="journal article" date="1997" name="DNA Cell Biol.">
        <title>Cloning and characterization of two human polyspecific organic cation transporters.</title>
        <authorList>
            <person name="Gorboulev V."/>
            <person name="Ulzheimer J.C."/>
            <person name="Akhoundova A."/>
            <person name="Ulzheimer-Teuber I."/>
            <person name="Karbach U."/>
            <person name="Quester S."/>
            <person name="Baumann C."/>
            <person name="Lang F."/>
            <person name="Busch A.E."/>
            <person name="Koepsell H."/>
        </authorList>
    </citation>
    <scope>NUCLEOTIDE SEQUENCE [MRNA] (ISOFORM 1)</scope>
    <scope>FUNCTION</scope>
    <scope>TRANSPORTER ACTIVITY</scope>
    <scope>BIOPHYSICOCHEMICAL PROPERTIES</scope>
    <scope>SUBCELLULAR LOCATION</scope>
    <scope>TISSUE SPECIFICITY</scope>
    <scope>MISCELLANEOUS</scope>
    <scope>VARIANT ALA-270</scope>
    <source>
        <tissue>Kidney cortex</tissue>
    </source>
</reference>
<reference key="2">
    <citation type="journal article" date="2002" name="J. Am. Soc. Nephrol.">
        <title>cDNA cloning, functional characterization, and tissue distribution of an alternatively spliced variant of organic cation transporter hOCT2 predominantly expressed in the human kidney.</title>
        <authorList>
            <person name="Urakami Y."/>
            <person name="Akazawa M."/>
            <person name="Saito H."/>
            <person name="Okuda M."/>
            <person name="Inui K."/>
        </authorList>
    </citation>
    <scope>NUCLEOTIDE SEQUENCE [MRNA] (ISOFORM 2)</scope>
    <scope>FUNCTION</scope>
    <scope>TRANSPORTER ACTIVITY</scope>
    <scope>TISSUE SPECIFICITY</scope>
    <scope>MISCELLANEOUS</scope>
    <scope>VARIANT ALA-270</scope>
    <source>
        <tissue>Kidney</tissue>
    </source>
</reference>
<reference key="3">
    <citation type="journal article" date="2004" name="Nat. Genet.">
        <title>Complete sequencing and characterization of 21,243 full-length human cDNAs.</title>
        <authorList>
            <person name="Ota T."/>
            <person name="Suzuki Y."/>
            <person name="Nishikawa T."/>
            <person name="Otsuki T."/>
            <person name="Sugiyama T."/>
            <person name="Irie R."/>
            <person name="Wakamatsu A."/>
            <person name="Hayashi K."/>
            <person name="Sato H."/>
            <person name="Nagai K."/>
            <person name="Kimura K."/>
            <person name="Makita H."/>
            <person name="Sekine M."/>
            <person name="Obayashi M."/>
            <person name="Nishi T."/>
            <person name="Shibahara T."/>
            <person name="Tanaka T."/>
            <person name="Ishii S."/>
            <person name="Yamamoto J."/>
            <person name="Saito K."/>
            <person name="Kawai Y."/>
            <person name="Isono Y."/>
            <person name="Nakamura Y."/>
            <person name="Nagahari K."/>
            <person name="Murakami K."/>
            <person name="Yasuda T."/>
            <person name="Iwayanagi T."/>
            <person name="Wagatsuma M."/>
            <person name="Shiratori A."/>
            <person name="Sudo H."/>
            <person name="Hosoiri T."/>
            <person name="Kaku Y."/>
            <person name="Kodaira H."/>
            <person name="Kondo H."/>
            <person name="Sugawara M."/>
            <person name="Takahashi M."/>
            <person name="Kanda K."/>
            <person name="Yokoi T."/>
            <person name="Furuya T."/>
            <person name="Kikkawa E."/>
            <person name="Omura Y."/>
            <person name="Abe K."/>
            <person name="Kamihara K."/>
            <person name="Katsuta N."/>
            <person name="Sato K."/>
            <person name="Tanikawa M."/>
            <person name="Yamazaki M."/>
            <person name="Ninomiya K."/>
            <person name="Ishibashi T."/>
            <person name="Yamashita H."/>
            <person name="Murakawa K."/>
            <person name="Fujimori K."/>
            <person name="Tanai H."/>
            <person name="Kimata M."/>
            <person name="Watanabe M."/>
            <person name="Hiraoka S."/>
            <person name="Chiba Y."/>
            <person name="Ishida S."/>
            <person name="Ono Y."/>
            <person name="Takiguchi S."/>
            <person name="Watanabe S."/>
            <person name="Yosida M."/>
            <person name="Hotuta T."/>
            <person name="Kusano J."/>
            <person name="Kanehori K."/>
            <person name="Takahashi-Fujii A."/>
            <person name="Hara H."/>
            <person name="Tanase T.-O."/>
            <person name="Nomura Y."/>
            <person name="Togiya S."/>
            <person name="Komai F."/>
            <person name="Hara R."/>
            <person name="Takeuchi K."/>
            <person name="Arita M."/>
            <person name="Imose N."/>
            <person name="Musashino K."/>
            <person name="Yuuki H."/>
            <person name="Oshima A."/>
            <person name="Sasaki N."/>
            <person name="Aotsuka S."/>
            <person name="Yoshikawa Y."/>
            <person name="Matsunawa H."/>
            <person name="Ichihara T."/>
            <person name="Shiohata N."/>
            <person name="Sano S."/>
            <person name="Moriya S."/>
            <person name="Momiyama H."/>
            <person name="Satoh N."/>
            <person name="Takami S."/>
            <person name="Terashima Y."/>
            <person name="Suzuki O."/>
            <person name="Nakagawa S."/>
            <person name="Senoh A."/>
            <person name="Mizoguchi H."/>
            <person name="Goto Y."/>
            <person name="Shimizu F."/>
            <person name="Wakebe H."/>
            <person name="Hishigaki H."/>
            <person name="Watanabe T."/>
            <person name="Sugiyama A."/>
            <person name="Takemoto M."/>
            <person name="Kawakami B."/>
            <person name="Yamazaki M."/>
            <person name="Watanabe K."/>
            <person name="Kumagai A."/>
            <person name="Itakura S."/>
            <person name="Fukuzumi Y."/>
            <person name="Fujimori Y."/>
            <person name="Komiyama M."/>
            <person name="Tashiro H."/>
            <person name="Tanigami A."/>
            <person name="Fujiwara T."/>
            <person name="Ono T."/>
            <person name="Yamada K."/>
            <person name="Fujii Y."/>
            <person name="Ozaki K."/>
            <person name="Hirao M."/>
            <person name="Ohmori Y."/>
            <person name="Kawabata A."/>
            <person name="Hikiji T."/>
            <person name="Kobatake N."/>
            <person name="Inagaki H."/>
            <person name="Ikema Y."/>
            <person name="Okamoto S."/>
            <person name="Okitani R."/>
            <person name="Kawakami T."/>
            <person name="Noguchi S."/>
            <person name="Itoh T."/>
            <person name="Shigeta K."/>
            <person name="Senba T."/>
            <person name="Matsumura K."/>
            <person name="Nakajima Y."/>
            <person name="Mizuno T."/>
            <person name="Morinaga M."/>
            <person name="Sasaki M."/>
            <person name="Togashi T."/>
            <person name="Oyama M."/>
            <person name="Hata H."/>
            <person name="Watanabe M."/>
            <person name="Komatsu T."/>
            <person name="Mizushima-Sugano J."/>
            <person name="Satoh T."/>
            <person name="Shirai Y."/>
            <person name="Takahashi Y."/>
            <person name="Nakagawa K."/>
            <person name="Okumura K."/>
            <person name="Nagase T."/>
            <person name="Nomura N."/>
            <person name="Kikuchi H."/>
            <person name="Masuho Y."/>
            <person name="Yamashita R."/>
            <person name="Nakai K."/>
            <person name="Yada T."/>
            <person name="Nakamura Y."/>
            <person name="Ohara O."/>
            <person name="Isogai T."/>
            <person name="Sugano S."/>
        </authorList>
    </citation>
    <scope>NUCLEOTIDE SEQUENCE [LARGE SCALE MRNA] (ISOFORM 1)</scope>
    <scope>VARIANT ALA-270</scope>
    <source>
        <tissue>Kidney</tissue>
    </source>
</reference>
<reference key="4">
    <citation type="journal article" date="2003" name="Nature">
        <title>The DNA sequence and analysis of human chromosome 6.</title>
        <authorList>
            <person name="Mungall A.J."/>
            <person name="Palmer S.A."/>
            <person name="Sims S.K."/>
            <person name="Edwards C.A."/>
            <person name="Ashurst J.L."/>
            <person name="Wilming L."/>
            <person name="Jones M.C."/>
            <person name="Horton R."/>
            <person name="Hunt S.E."/>
            <person name="Scott C.E."/>
            <person name="Gilbert J.G.R."/>
            <person name="Clamp M.E."/>
            <person name="Bethel G."/>
            <person name="Milne S."/>
            <person name="Ainscough R."/>
            <person name="Almeida J.P."/>
            <person name="Ambrose K.D."/>
            <person name="Andrews T.D."/>
            <person name="Ashwell R.I.S."/>
            <person name="Babbage A.K."/>
            <person name="Bagguley C.L."/>
            <person name="Bailey J."/>
            <person name="Banerjee R."/>
            <person name="Barker D.J."/>
            <person name="Barlow K.F."/>
            <person name="Bates K."/>
            <person name="Beare D.M."/>
            <person name="Beasley H."/>
            <person name="Beasley O."/>
            <person name="Bird C.P."/>
            <person name="Blakey S.E."/>
            <person name="Bray-Allen S."/>
            <person name="Brook J."/>
            <person name="Brown A.J."/>
            <person name="Brown J.Y."/>
            <person name="Burford D.C."/>
            <person name="Burrill W."/>
            <person name="Burton J."/>
            <person name="Carder C."/>
            <person name="Carter N.P."/>
            <person name="Chapman J.C."/>
            <person name="Clark S.Y."/>
            <person name="Clark G."/>
            <person name="Clee C.M."/>
            <person name="Clegg S."/>
            <person name="Cobley V."/>
            <person name="Collier R.E."/>
            <person name="Collins J.E."/>
            <person name="Colman L.K."/>
            <person name="Corby N.R."/>
            <person name="Coville G.J."/>
            <person name="Culley K.M."/>
            <person name="Dhami P."/>
            <person name="Davies J."/>
            <person name="Dunn M."/>
            <person name="Earthrowl M.E."/>
            <person name="Ellington A.E."/>
            <person name="Evans K.A."/>
            <person name="Faulkner L."/>
            <person name="Francis M.D."/>
            <person name="Frankish A."/>
            <person name="Frankland J."/>
            <person name="French L."/>
            <person name="Garner P."/>
            <person name="Garnett J."/>
            <person name="Ghori M.J."/>
            <person name="Gilby L.M."/>
            <person name="Gillson C.J."/>
            <person name="Glithero R.J."/>
            <person name="Grafham D.V."/>
            <person name="Grant M."/>
            <person name="Gribble S."/>
            <person name="Griffiths C."/>
            <person name="Griffiths M.N.D."/>
            <person name="Hall R."/>
            <person name="Halls K.S."/>
            <person name="Hammond S."/>
            <person name="Harley J.L."/>
            <person name="Hart E.A."/>
            <person name="Heath P.D."/>
            <person name="Heathcott R."/>
            <person name="Holmes S.J."/>
            <person name="Howden P.J."/>
            <person name="Howe K.L."/>
            <person name="Howell G.R."/>
            <person name="Huckle E."/>
            <person name="Humphray S.J."/>
            <person name="Humphries M.D."/>
            <person name="Hunt A.R."/>
            <person name="Johnson C.M."/>
            <person name="Joy A.A."/>
            <person name="Kay M."/>
            <person name="Keenan S.J."/>
            <person name="Kimberley A.M."/>
            <person name="King A."/>
            <person name="Laird G.K."/>
            <person name="Langford C."/>
            <person name="Lawlor S."/>
            <person name="Leongamornlert D.A."/>
            <person name="Leversha M."/>
            <person name="Lloyd C.R."/>
            <person name="Lloyd D.M."/>
            <person name="Loveland J.E."/>
            <person name="Lovell J."/>
            <person name="Martin S."/>
            <person name="Mashreghi-Mohammadi M."/>
            <person name="Maslen G.L."/>
            <person name="Matthews L."/>
            <person name="McCann O.T."/>
            <person name="McLaren S.J."/>
            <person name="McLay K."/>
            <person name="McMurray A."/>
            <person name="Moore M.J.F."/>
            <person name="Mullikin J.C."/>
            <person name="Niblett D."/>
            <person name="Nickerson T."/>
            <person name="Novik K.L."/>
            <person name="Oliver K."/>
            <person name="Overton-Larty E.K."/>
            <person name="Parker A."/>
            <person name="Patel R."/>
            <person name="Pearce A.V."/>
            <person name="Peck A.I."/>
            <person name="Phillimore B.J.C.T."/>
            <person name="Phillips S."/>
            <person name="Plumb R.W."/>
            <person name="Porter K.M."/>
            <person name="Ramsey Y."/>
            <person name="Ranby S.A."/>
            <person name="Rice C.M."/>
            <person name="Ross M.T."/>
            <person name="Searle S.M."/>
            <person name="Sehra H.K."/>
            <person name="Sheridan E."/>
            <person name="Skuce C.D."/>
            <person name="Smith S."/>
            <person name="Smith M."/>
            <person name="Spraggon L."/>
            <person name="Squares S.L."/>
            <person name="Steward C.A."/>
            <person name="Sycamore N."/>
            <person name="Tamlyn-Hall G."/>
            <person name="Tester J."/>
            <person name="Theaker A.J."/>
            <person name="Thomas D.W."/>
            <person name="Thorpe A."/>
            <person name="Tracey A."/>
            <person name="Tromans A."/>
            <person name="Tubby B."/>
            <person name="Wall M."/>
            <person name="Wallis J.M."/>
            <person name="West A.P."/>
            <person name="White S.S."/>
            <person name="Whitehead S.L."/>
            <person name="Whittaker H."/>
            <person name="Wild A."/>
            <person name="Willey D.J."/>
            <person name="Wilmer T.E."/>
            <person name="Wood J.M."/>
            <person name="Wray P.W."/>
            <person name="Wyatt J.C."/>
            <person name="Young L."/>
            <person name="Younger R.M."/>
            <person name="Bentley D.R."/>
            <person name="Coulson A."/>
            <person name="Durbin R.M."/>
            <person name="Hubbard T."/>
            <person name="Sulston J.E."/>
            <person name="Dunham I."/>
            <person name="Rogers J."/>
            <person name="Beck S."/>
        </authorList>
    </citation>
    <scope>NUCLEOTIDE SEQUENCE [LARGE SCALE GENOMIC DNA]</scope>
</reference>
<reference key="5">
    <citation type="submission" date="2005-09" db="EMBL/GenBank/DDBJ databases">
        <authorList>
            <person name="Mural R.J."/>
            <person name="Istrail S."/>
            <person name="Sutton G.G."/>
            <person name="Florea L."/>
            <person name="Halpern A.L."/>
            <person name="Mobarry C.M."/>
            <person name="Lippert R."/>
            <person name="Walenz B."/>
            <person name="Shatkay H."/>
            <person name="Dew I."/>
            <person name="Miller J.R."/>
            <person name="Flanigan M.J."/>
            <person name="Edwards N.J."/>
            <person name="Bolanos R."/>
            <person name="Fasulo D."/>
            <person name="Halldorsson B.V."/>
            <person name="Hannenhalli S."/>
            <person name="Turner R."/>
            <person name="Yooseph S."/>
            <person name="Lu F."/>
            <person name="Nusskern D.R."/>
            <person name="Shue B.C."/>
            <person name="Zheng X.H."/>
            <person name="Zhong F."/>
            <person name="Delcher A.L."/>
            <person name="Huson D.H."/>
            <person name="Kravitz S.A."/>
            <person name="Mouchard L."/>
            <person name="Reinert K."/>
            <person name="Remington K.A."/>
            <person name="Clark A.G."/>
            <person name="Waterman M.S."/>
            <person name="Eichler E.E."/>
            <person name="Adams M.D."/>
            <person name="Hunkapiller M.W."/>
            <person name="Myers E.W."/>
            <person name="Venter J.C."/>
        </authorList>
    </citation>
    <scope>NUCLEOTIDE SEQUENCE [LARGE SCALE GENOMIC DNA]</scope>
</reference>
<reference key="6">
    <citation type="journal article" date="2004" name="Genome Res.">
        <title>The status, quality, and expansion of the NIH full-length cDNA project: the Mammalian Gene Collection (MGC).</title>
        <authorList>
            <consortium name="The MGC Project Team"/>
        </authorList>
    </citation>
    <scope>NUCLEOTIDE SEQUENCE [LARGE SCALE MRNA] (ISOFORMS 1 AND 3)</scope>
    <scope>VARIANT ALA-270</scope>
    <source>
        <tissue>Colon</tissue>
        <tissue>Kidney</tissue>
    </source>
</reference>
<reference key="7">
    <citation type="journal article" date="2000" name="Hum. Genet.">
        <title>Gene structures of the human non-neuronal monoamine transporters EMT and OCT2.</title>
        <authorList>
            <person name="Gruendemann D."/>
            <person name="Schoemig E."/>
        </authorList>
    </citation>
    <scope>NUCLEOTIDE SEQUENCE [GENOMIC DNA] OF 1-138</scope>
</reference>
<reference key="8">
    <citation type="journal article" date="1998" name="Mol. Pharmacol.">
        <title>Human neurons express the polyspecific cation transporter hOCT2, which translocates monoamine neurotransmitters, amantadine, and memantine.</title>
        <authorList>
            <person name="Busch A.E."/>
            <person name="Karbach U."/>
            <person name="Miska D."/>
            <person name="Gorboulev V."/>
            <person name="Akhoundova A."/>
            <person name="Volk C."/>
            <person name="Arndt P."/>
            <person name="Ulzheimer J.C."/>
            <person name="Sonders M.S."/>
            <person name="Baumann C."/>
            <person name="Waldegger S."/>
            <person name="Lang F."/>
            <person name="Koepsell H."/>
        </authorList>
    </citation>
    <scope>FUNCTION</scope>
    <scope>TRANSPORTER ACTIVITY</scope>
    <scope>BIOPHYSICOCHEMICAL PROPERTIES</scope>
    <scope>TISSUE SPECIFICITY</scope>
    <scope>MISCELLANEOUS</scope>
</reference>
<reference key="9">
    <citation type="journal article" date="2002" name="J. Am. Soc. Nephrol.">
        <title>Gene expression levels and immunolocalization of organic ion transporters in the human kidney.</title>
        <authorList>
            <person name="Motohashi H."/>
            <person name="Sakurai Y."/>
            <person name="Saito H."/>
            <person name="Masuda S."/>
            <person name="Urakami Y."/>
            <person name="Goto M."/>
            <person name="Fukatsu A."/>
            <person name="Ogawa O."/>
            <person name="Inui K."/>
        </authorList>
    </citation>
    <scope>SUBCELLULAR LOCATION</scope>
    <scope>TISSUE SPECIFICITY</scope>
</reference>
<reference key="10">
    <citation type="journal article" date="2002" name="J. Membr. Biol.">
        <title>The organic cation transporters rOCT1 and hOCT2 are inhibited by cGMP.</title>
        <authorList>
            <person name="Schlatter E."/>
            <person name="Moennich V."/>
            <person name="Cetinkaya I."/>
            <person name="Mehrens T."/>
            <person name="Ciarimboli G."/>
            <person name="Hirsch J.R."/>
            <person name="Popp C."/>
            <person name="Koepsell H."/>
        </authorList>
    </citation>
    <scope>ACTIVITY REGULATION</scope>
</reference>
<reference key="11">
    <citation type="journal article" date="2002" name="J. Pharmacol. Exp. Ther.">
        <title>Human organic anion transporters and human organic cation transporters mediate renal transport of prostaglandins.</title>
        <authorList>
            <person name="Kimura H."/>
            <person name="Takeda M."/>
            <person name="Narikawa S."/>
            <person name="Enomoto A."/>
            <person name="Ichida K."/>
            <person name="Endou H."/>
        </authorList>
    </citation>
    <scope>FUNCTION</scope>
    <scope>TRANSPORTER ACTIVITY</scope>
    <scope>BIOPHYSICOCHEMICAL PROPERTIES</scope>
</reference>
<reference key="12">
    <citation type="journal article" date="2003" name="J. Pharmacol. Exp. Ther.">
        <title>Agmatine is efficiently transported by non-neuronal monoamine transporters extraneuronal monoamine transporter (EMT) and organic cation transporter 2 (OCT2).</title>
        <authorList>
            <person name="Grundemann D."/>
            <person name="Hahne C."/>
            <person name="Berkels R."/>
            <person name="Schomig E."/>
        </authorList>
    </citation>
    <scope>FUNCTION</scope>
    <scope>TRANSPORTER ACTIVITY</scope>
    <scope>BIOPHYSICOCHEMICAL PROPERTIES</scope>
</reference>
<reference key="13">
    <citation type="journal article" date="2004" name="Eur. J. Pharmacol.">
        <title>Different transport properties between famotidine and cimetidine by human renal organic ion transporters (SLC22A).</title>
        <authorList>
            <person name="Motohashi H."/>
            <person name="Uwai Y."/>
            <person name="Hiramoto K."/>
            <person name="Okuda M."/>
            <person name="Inui K."/>
        </authorList>
    </citation>
    <scope>MISCELLANEOUS</scope>
</reference>
<reference key="14">
    <citation type="journal article" date="2004" name="Pharm. Res.">
        <title>Creatinine transport by basolateral organic cation transporter hOCT2 in the human kidney.</title>
        <authorList>
            <person name="Urakami Y."/>
            <person name="Kimura N."/>
            <person name="Okuda M."/>
            <person name="Inui K."/>
        </authorList>
    </citation>
    <scope>FUNCTION</scope>
    <scope>TRANSPORTER ACTIVITY</scope>
    <scope>BIOPHYSICOCHEMICAL PROPERTIES</scope>
</reference>
<reference key="15">
    <citation type="journal article" date="2005" name="Am. J. Pathol.">
        <title>Cisplatin nephrotoxicity is critically mediated via the human organic cation transporter 2.</title>
        <authorList>
            <person name="Ciarimboli G."/>
            <person name="Ludwig T."/>
            <person name="Lang D."/>
            <person name="Pavenstaedt H."/>
            <person name="Koepsell H."/>
            <person name="Piechota H.J."/>
            <person name="Haier J."/>
            <person name="Jaehde U."/>
            <person name="Zisowsky J."/>
            <person name="Schlatter E."/>
        </authorList>
    </citation>
    <scope>INDUCTION</scope>
    <scope>MISCELLANEOUS</scope>
</reference>
<reference key="16">
    <citation type="journal article" date="2005" name="Am. J. Respir. Cell Mol. Biol.">
        <title>Polyspecific cation transporters mediate luminal release of acetylcholine from bronchial epithelium.</title>
        <authorList>
            <person name="Lips K.S."/>
            <person name="Volk C."/>
            <person name="Schmitt B.M."/>
            <person name="Pfeil U."/>
            <person name="Arndt P."/>
            <person name="Miska D."/>
            <person name="Ermert L."/>
            <person name="Kummer W."/>
            <person name="Koepsell H."/>
        </authorList>
    </citation>
    <scope>FUNCTION</scope>
    <scope>TRANSPORTER ACTIVITY</scope>
    <scope>BIOPHYSICOCHEMICAL PROPERTIES</scope>
    <scope>SUBCELLULAR LOCATION</scope>
    <scope>TISSUE SPECIFICITY</scope>
</reference>
<reference key="17">
    <citation type="journal article" date="2005" name="Biochem. Pharmacol.">
        <title>Drug specificity and intestinal membrane localization of human organic cation transporters (OCT).</title>
        <authorList>
            <person name="Mueller J."/>
            <person name="Lips K.S."/>
            <person name="Metzner L."/>
            <person name="Neubert R.H.H."/>
            <person name="Koepsell H."/>
            <person name="Brandsch M."/>
        </authorList>
    </citation>
    <scope>FUNCTION</scope>
    <scope>SUBCELLULAR LOCATION</scope>
    <scope>TISSUE SPECIFICITY</scope>
    <scope>MISCELLANEOUS</scope>
</reference>
<reference key="18">
    <citation type="journal article" date="2005" name="Drug Metab. Pharmacokinet.">
        <title>Metformin is a superior substrate for renal organic cation transporter OCT2 rather than hepatic OCT1.</title>
        <authorList>
            <person name="Kimura N."/>
            <person name="Masuda S."/>
            <person name="Tanihara Y."/>
            <person name="Ueo H."/>
            <person name="Okuda M."/>
            <person name="Katsura T."/>
            <person name="Inui K."/>
        </authorList>
    </citation>
    <scope>MISCELLANEOUS</scope>
</reference>
<reference key="19">
    <citation type="journal article" date="2005" name="J. Pharmacol. Exp. Ther.">
        <title>A species difference in the transport activities of H2 receptor antagonists by rat and human renal organic anion and cation transporters.</title>
        <authorList>
            <person name="Tahara H."/>
            <person name="Kusuhara H."/>
            <person name="Endou H."/>
            <person name="Koepsell H."/>
            <person name="Imaoka T."/>
            <person name="Fuse E."/>
            <person name="Sugiyama Y."/>
        </authorList>
    </citation>
    <scope>MISCELLANEOUS</scope>
</reference>
<reference key="20">
    <citation type="journal article" date="2005" name="Pharm. Res.">
        <title>Metformin transport by renal basolateral organic cation transporter hOCT2.</title>
        <authorList>
            <person name="Kimura N."/>
            <person name="Okuda M."/>
            <person name="Inui K."/>
        </authorList>
    </citation>
    <scope>MISCELLANEOUS</scope>
</reference>
<reference key="21">
    <citation type="journal article" date="2006" name="Am. J. Physiol.">
        <title>Characterization of regulatory mechanisms and states of human organic cation transporter 2.</title>
        <authorList>
            <person name="Biermann J."/>
            <person name="Lang D."/>
            <person name="Gorboulev V."/>
            <person name="Koepsell H."/>
            <person name="Sindic A."/>
            <person name="Schroter R."/>
            <person name="Zvirbliene A."/>
            <person name="Pavenstadt H."/>
            <person name="Schlatter E."/>
            <person name="Ciarimboli G."/>
        </authorList>
    </citation>
    <scope>MISCELLANEOUS</scope>
</reference>
<reference key="22">
    <citation type="journal article" date="2006" name="Cancer Res.">
        <title>Organic cation transporters are determinants of oxaliplatin cytotoxicity.</title>
        <authorList>
            <person name="Zhang S."/>
            <person name="Lovejoy K.S."/>
            <person name="Shima J.E."/>
            <person name="Lagpacan L.L."/>
            <person name="Shu Y."/>
            <person name="Lapuk A."/>
            <person name="Chen Y."/>
            <person name="Komori T."/>
            <person name="Gray J.W."/>
            <person name="Chen X."/>
            <person name="Lippard S.J."/>
            <person name="Giacomini K.M."/>
        </authorList>
    </citation>
    <scope>MISCELLANEOUS</scope>
</reference>
<reference key="23">
    <citation type="journal article" date="2006" name="Drug Metab. Pharmacokinet.">
        <title>Interactions of fluoroquinolone antibacterials, DX-619 and levofloxacin, with creatinine transport by renal organic cation transporter hOCT2.</title>
        <authorList>
            <person name="Okuda M."/>
            <person name="Kimura N."/>
            <person name="Inui K."/>
        </authorList>
    </citation>
    <scope>FUNCTION</scope>
    <scope>TRANSPORTER ACTIVITY</scope>
</reference>
<reference key="24">
    <citation type="journal article" date="2006" name="J. Pharmacol. Exp. Ther.">
        <title>Cisplatin and oxaliplatin, but not carboplatin and nedaplatin, are substrates for human organic cation transporters (SLC22A1-3 and multidrug and toxin extrusion family).</title>
        <authorList>
            <person name="Yonezawa A."/>
            <person name="Masuda S."/>
            <person name="Yokoo S."/>
            <person name="Katsura T."/>
            <person name="Inui K."/>
        </authorList>
    </citation>
    <scope>MISCELLANEOUS</scope>
</reference>
<reference key="25">
    <citation type="journal article" date="2006" name="Neuropharmacology">
        <title>Differential pharmacological in vitro properties of organic cation transporters and regional distribution in rat brain.</title>
        <authorList>
            <person name="Amphoux A."/>
            <person name="Vialou V."/>
            <person name="Drescher E."/>
            <person name="Bruess M."/>
            <person name="Mannoury La Cour C."/>
            <person name="Rochat C."/>
            <person name="Millan M.J."/>
            <person name="Giros B."/>
            <person name="Boenisch H."/>
            <person name="Gautron S."/>
        </authorList>
    </citation>
    <scope>FUNCTION</scope>
    <scope>TRANSPORTER ACTIVITY</scope>
    <scope>BIOPHYSICOCHEMICAL PROPERTIES</scope>
    <scope>MISCELLANEOUS</scope>
</reference>
<reference key="26">
    <citation type="journal article" date="2007" name="Mol. Reprod. Dev.">
        <title>The organic cation transporters (OCT1, OCT2, EMT) and the plasma membrane monoamine transporter (PMAT) show differential distribution and cyclic expression pattern in human endometrium and early pregnancy decidua.</title>
        <authorList>
            <person name="Bottalico B."/>
            <person name="Noskova V."/>
            <person name="Pilka R."/>
            <person name="Larsson I."/>
            <person name="Domanski H."/>
            <person name="Casslen B."/>
            <person name="Hansson S.R."/>
        </authorList>
    </citation>
    <scope>TISSUE SPECIFICITY</scope>
</reference>
<reference key="27">
    <citation type="journal article" date="2011" name="Mol. Pharm.">
        <title>OCT2 and MATE1 provide bidirectional agmatine transport.</title>
        <authorList>
            <person name="Winter T.N."/>
            <person name="Elmquist W.F."/>
            <person name="Fairbanks C.A."/>
        </authorList>
    </citation>
    <scope>FUNCTION</scope>
    <scope>TRANSPORTER ACTIVITY</scope>
    <scope>BIOPHYSICOCHEMICAL PROPERTIES</scope>
</reference>
<reference key="28">
    <citation type="journal article" date="2014" name="Proc. Natl. Acad. Sci. U.S.A.">
        <title>OCT1 is a high-capacity thiamine transporter that regulates hepatic steatosis and is a target of metformin.</title>
        <authorList>
            <person name="Chen L."/>
            <person name="Shu Y."/>
            <person name="Liang X."/>
            <person name="Chen E.C."/>
            <person name="Yee S.W."/>
            <person name="Zur A.A."/>
            <person name="Li S."/>
            <person name="Xu L."/>
            <person name="Keshari K.R."/>
            <person name="Lin M.J."/>
            <person name="Chien H.C."/>
            <person name="Zhang Y."/>
            <person name="Morrissey K.M."/>
            <person name="Liu J."/>
            <person name="Ostrem J."/>
            <person name="Younger N.S."/>
            <person name="Kurhanewicz J."/>
            <person name="Shokat K.M."/>
            <person name="Ashrafi K."/>
            <person name="Giacomini K.M."/>
        </authorList>
    </citation>
    <scope>FUNCTION</scope>
    <scope>TRANSPORTER ACTIVITY</scope>
    <scope>BIOPHYSICOCHEMICAL PROPERTIES</scope>
    <scope>MISCELLANEOUS</scope>
</reference>
<reference key="29">
    <citation type="journal article" date="2016" name="Nat. Commun.">
        <title>A phosphotyrosine switch regulates organic cation transporters.</title>
        <authorList>
            <person name="Sprowl J.A."/>
            <person name="Ong S.S."/>
            <person name="Gibson A.A."/>
            <person name="Hu S."/>
            <person name="Du G."/>
            <person name="Lin W."/>
            <person name="Li L."/>
            <person name="Bharill S."/>
            <person name="Ness R.A."/>
            <person name="Stecula A."/>
            <person name="Offer S.M."/>
            <person name="Diasio R.B."/>
            <person name="Nies A.T."/>
            <person name="Schwab M."/>
            <person name="Cavaletti G."/>
            <person name="Schlatter E."/>
            <person name="Ciarimboli G."/>
            <person name="Schellens J.H.M."/>
            <person name="Isacoff E.Y."/>
            <person name="Sali A."/>
            <person name="Chen T."/>
            <person name="Baker S.D."/>
            <person name="Sparreboom A."/>
            <person name="Pabla N."/>
        </authorList>
    </citation>
    <scope>ACTIVITY REGULATION</scope>
    <scope>PHOSPHORYLATION</scope>
    <scope>DOMAIN</scope>
    <scope>MUTAGENESIS OF TYR-73; TYR-92; TYR-128; TYR-169; TYR-241; TYR-257; TYR-279; TYR-280; PRO-284; SER-286; PRO-287; TYR-362; TYR-377; TYR-458 AND TYR-544</scope>
</reference>
<reference key="30">
    <citation type="journal article" date="2022" name="Drug Metab. Dispos.">
        <title>Localization of Xenobiotic Transporters Expressed at the Human Blood-Testis Barrier.</title>
        <authorList>
            <person name="Hau R.K."/>
            <person name="Klein R.R."/>
            <person name="Wright S.H."/>
            <person name="Cherrington N.J."/>
        </authorList>
    </citation>
    <scope>FUNCTION</scope>
    <scope>SUBCELLULAR LOCATION</scope>
    <scope>TISSUE SPECIFICITY</scope>
</reference>
<reference key="31">
    <citation type="journal article" date="2002" name="Pharmacogenetics">
        <title>Polymorphisms in a human kidney xenobiotic transporter, OCT2, exhibit altered function.</title>
        <authorList>
            <person name="Leabman M.K."/>
            <person name="Huang C.C."/>
            <person name="Kawamoto M."/>
            <person name="Johns S.J."/>
            <person name="Stryke D."/>
            <person name="Ferrin T.E."/>
            <person name="DeYoung J."/>
            <person name="Taylor T."/>
            <person name="Clark A.G."/>
            <person name="Herskowitz I."/>
            <person name="Giacomini K.M."/>
        </authorList>
    </citation>
    <scope>VARIANT SER-54</scope>
    <scope>CHARACTERIZATION OF VARIANTS ILE-165; ALA-270; CYS-400 AND GLN-432</scope>
</reference>
<reference key="32">
    <citation type="journal article" date="2007" name="J. Hum. Genet.">
        <title>Human organic cation transporter (OCT1 and OCT2) gene polymorphisms and therapeutic effects of metformin.</title>
        <authorList>
            <person name="Shikata E."/>
            <person name="Yamamoto R."/>
            <person name="Takane H."/>
            <person name="Shigemasa C."/>
            <person name="Ikeda T."/>
            <person name="Otsubo K."/>
            <person name="Ieiri I."/>
        </authorList>
    </citation>
    <scope>VARIANTS MET-201 AND ALA-270</scope>
</reference>
<reference key="33">
    <citation type="journal article" date="2007" name="PLoS ONE">
        <title>Identification of the endogenous key substrates of the human organic cation transporter OCT2 and their implication in function of dopaminergic neurons.</title>
        <authorList>
            <person name="Taubert D."/>
            <person name="Grimberg G."/>
            <person name="Stenzel W."/>
            <person name="Schoemig E."/>
        </authorList>
    </citation>
    <scope>VARIANTS ILE-165; ALA-270; CYS-400 AND GLN-432</scope>
    <scope>CHARACTERIZATION OF VARIANTS ILE-165; ALA-270; CYS-400 AND GLN-432</scope>
    <scope>FUNCTION</scope>
    <scope>TRANSPORTER ACTIVITY</scope>
    <scope>BIOPHYSICOCHEMICAL PROPERTIES</scope>
    <scope>TISSUE SPECIFICITY</scope>
</reference>
<sequence>MPTTVDDVLEHGGEFHFFQKQMFFLLALLSATFAPIYVGIVFLGFTPDHRCRSPGVAELSLRCGWSPAEELNYTVPGPGPAGEASPRQCRRYEVDWNQSTFDCVDPLASLDTNRSRLPLGPCRDGWVYETPGSSIVTEFNLVCANSWMLDLFQSSVNVGFFIGSMSIGYIADRFGRKLCLLTTVLINAAAGVLMAISPTYTWMLIFRLIQGLVSKAGWLIGYILITEFVGRRYRRTVGIFYQVAYTVGLLVLAGVAYALPHWRWLQFTVSLPNFFFLLYYWCIPESPRWLISQNKNAEAMRIIKHIAKKNGKSLPASLQRLRLEEETGKKLNPSFLDLVRTPQIRKHTMILMYNWFTSSVLYQGLIMHMGLAGDNIYLDFFYSALVEFPAAFMIILTIDRIGRRYPWAASNMVAGAACLASVFIPGDLQWLKIIISCLGRMGITMAYEIVCLVNAELYPTFIRNLGVHICSSMCDIGGIITPFLVYRLTNIWLELPLMVFGVLGLVAGGLVLLLPETKGKALPETIEEAENMQRPRKNKEKMIYLQVQKLDIPLN</sequence>
<gene>
    <name evidence="41" type="primary">SLC22A2</name>
    <name type="synonym">OCT2</name>
</gene>
<organism>
    <name type="scientific">Homo sapiens</name>
    <name type="common">Human</name>
    <dbReference type="NCBI Taxonomy" id="9606"/>
    <lineage>
        <taxon>Eukaryota</taxon>
        <taxon>Metazoa</taxon>
        <taxon>Chordata</taxon>
        <taxon>Craniata</taxon>
        <taxon>Vertebrata</taxon>
        <taxon>Euteleostomi</taxon>
        <taxon>Mammalia</taxon>
        <taxon>Eutheria</taxon>
        <taxon>Euarchontoglires</taxon>
        <taxon>Primates</taxon>
        <taxon>Haplorrhini</taxon>
        <taxon>Catarrhini</taxon>
        <taxon>Hominidae</taxon>
        <taxon>Homo</taxon>
    </lineage>
</organism>
<protein>
    <recommendedName>
        <fullName evidence="34">Solute carrier family 22 member 2</fullName>
    </recommendedName>
    <alternativeName>
        <fullName evidence="37">Organic cation transporter 2</fullName>
        <shortName evidence="37">hOCT2</shortName>
    </alternativeName>
</protein>